<proteinExistence type="evidence at protein level"/>
<dbReference type="EC" id="3.4.22.57" evidence="13 38 39 41"/>
<dbReference type="EMBL" id="Z48810">
    <property type="protein sequence ID" value="CAA88750.1"/>
    <property type="molecule type" value="mRNA"/>
</dbReference>
<dbReference type="EMBL" id="U28014">
    <property type="protein sequence ID" value="AAA75171.1"/>
    <property type="molecule type" value="mRNA"/>
</dbReference>
<dbReference type="EMBL" id="U25804">
    <property type="protein sequence ID" value="AAA86890.1"/>
    <property type="molecule type" value="mRNA"/>
</dbReference>
<dbReference type="EMBL" id="U28976">
    <property type="protein sequence ID" value="AAC99850.1"/>
    <property type="molecule type" value="mRNA"/>
</dbReference>
<dbReference type="EMBL" id="U28977">
    <property type="protein sequence ID" value="AAC99851.1"/>
    <property type="status" value="ALT_FRAME"/>
    <property type="molecule type" value="mRNA"/>
</dbReference>
<dbReference type="EMBL" id="U28978">
    <property type="protein sequence ID" value="AAC99852.1"/>
    <property type="molecule type" value="mRNA"/>
</dbReference>
<dbReference type="EMBL" id="U28979">
    <property type="protein sequence ID" value="AAC99853.1"/>
    <property type="molecule type" value="mRNA"/>
</dbReference>
<dbReference type="EMBL" id="U28979">
    <property type="protein sequence ID" value="AAC99854.1"/>
    <property type="status" value="ALT_SEQ"/>
    <property type="molecule type" value="mRNA"/>
</dbReference>
<dbReference type="EMBL" id="AK057094">
    <property type="protein sequence ID" value="BAG51861.1"/>
    <property type="molecule type" value="mRNA"/>
</dbReference>
<dbReference type="EMBL" id="AK296081">
    <property type="protein sequence ID" value="BAG58837.1"/>
    <property type="molecule type" value="mRNA"/>
</dbReference>
<dbReference type="EMBL" id="AK304222">
    <property type="protein sequence ID" value="BAG65094.1"/>
    <property type="molecule type" value="mRNA"/>
</dbReference>
<dbReference type="EMBL" id="EF636667">
    <property type="protein sequence ID" value="ABR09278.1"/>
    <property type="molecule type" value="Genomic_DNA"/>
</dbReference>
<dbReference type="EMBL" id="AP001153">
    <property type="status" value="NOT_ANNOTATED_CDS"/>
    <property type="molecule type" value="Genomic_DNA"/>
</dbReference>
<dbReference type="EMBL" id="AP002004">
    <property type="status" value="NOT_ANNOTATED_CDS"/>
    <property type="molecule type" value="Genomic_DNA"/>
</dbReference>
<dbReference type="EMBL" id="CH471065">
    <property type="protein sequence ID" value="EAW67050.1"/>
    <property type="status" value="ALT_SEQ"/>
    <property type="molecule type" value="Genomic_DNA"/>
</dbReference>
<dbReference type="EMBL" id="CH471065">
    <property type="protein sequence ID" value="EAW67051.1"/>
    <property type="molecule type" value="Genomic_DNA"/>
</dbReference>
<dbReference type="EMBL" id="CH471065">
    <property type="protein sequence ID" value="EAW67052.1"/>
    <property type="molecule type" value="Genomic_DNA"/>
</dbReference>
<dbReference type="EMBL" id="BC017839">
    <property type="protein sequence ID" value="AAH17839.1"/>
    <property type="molecule type" value="mRNA"/>
</dbReference>
<dbReference type="EMBL" id="AL050391">
    <property type="protein sequence ID" value="CAB43686.2"/>
    <property type="molecule type" value="mRNA"/>
</dbReference>
<dbReference type="CCDS" id="CCDS41704.1">
    <molecule id="P49662-2"/>
</dbReference>
<dbReference type="CCDS" id="CCDS8327.1">
    <molecule id="P49662-1"/>
</dbReference>
<dbReference type="PIR" id="A57511">
    <property type="entry name" value="A57511"/>
</dbReference>
<dbReference type="RefSeq" id="NP_001216.1">
    <molecule id="P49662-1"/>
    <property type="nucleotide sequence ID" value="NM_001225.4"/>
</dbReference>
<dbReference type="RefSeq" id="NP_150649.1">
    <molecule id="P49662-2"/>
    <property type="nucleotide sequence ID" value="NM_033306.3"/>
</dbReference>
<dbReference type="RefSeq" id="XP_011541321.1">
    <property type="nucleotide sequence ID" value="XM_011543019.1"/>
</dbReference>
<dbReference type="RefSeq" id="XP_016873886.1">
    <property type="nucleotide sequence ID" value="XM_017018397.1"/>
</dbReference>
<dbReference type="PDB" id="6KMZ">
    <property type="method" value="X-ray"/>
    <property type="resolution" value="3.61 A"/>
    <property type="chains" value="A/B/C/D=105-377"/>
</dbReference>
<dbReference type="PDB" id="6NRY">
    <property type="method" value="X-ray"/>
    <property type="resolution" value="2.18 A"/>
    <property type="chains" value="A=92-377"/>
</dbReference>
<dbReference type="PDB" id="7WR0">
    <property type="method" value="X-ray"/>
    <property type="resolution" value="2.80 A"/>
    <property type="chains" value="A=102-377"/>
</dbReference>
<dbReference type="PDB" id="7WR1">
    <property type="method" value="X-ray"/>
    <property type="resolution" value="2.13 A"/>
    <property type="chains" value="A/B=102-377"/>
</dbReference>
<dbReference type="PDB" id="7WR4">
    <property type="method" value="X-ray"/>
    <property type="resolution" value="2.75 A"/>
    <property type="chains" value="C=102-377"/>
</dbReference>
<dbReference type="PDB" id="7WR5">
    <property type="method" value="X-ray"/>
    <property type="resolution" value="3.10 A"/>
    <property type="chains" value="C=102-377"/>
</dbReference>
<dbReference type="PDB" id="7WR6">
    <property type="method" value="X-ray"/>
    <property type="resolution" value="1.96 A"/>
    <property type="chains" value="A=102-377"/>
</dbReference>
<dbReference type="PDB" id="8J6K">
    <property type="method" value="X-ray"/>
    <property type="resolution" value="3.12 A"/>
    <property type="chains" value="A=102-270, a=290-377"/>
</dbReference>
<dbReference type="PDB" id="8SPB">
    <property type="method" value="EM"/>
    <property type="resolution" value="3.20 A"/>
    <property type="chains" value="A/a=94-270, B/b=290-377"/>
</dbReference>
<dbReference type="PDBsum" id="6KMZ"/>
<dbReference type="PDBsum" id="6NRY"/>
<dbReference type="PDBsum" id="7WR0"/>
<dbReference type="PDBsum" id="7WR1"/>
<dbReference type="PDBsum" id="7WR4"/>
<dbReference type="PDBsum" id="7WR5"/>
<dbReference type="PDBsum" id="7WR6"/>
<dbReference type="PDBsum" id="8J6K"/>
<dbReference type="PDBsum" id="8SPB"/>
<dbReference type="EMDB" id="EMD-40678"/>
<dbReference type="SMR" id="P49662"/>
<dbReference type="BioGRID" id="107287">
    <property type="interactions" value="48"/>
</dbReference>
<dbReference type="DIP" id="DIP-44806N"/>
<dbReference type="FunCoup" id="P49662">
    <property type="interactions" value="728"/>
</dbReference>
<dbReference type="IntAct" id="P49662">
    <property type="interactions" value="11"/>
</dbReference>
<dbReference type="MINT" id="P49662"/>
<dbReference type="STRING" id="9606.ENSP00000388566"/>
<dbReference type="BindingDB" id="P49662"/>
<dbReference type="ChEMBL" id="CHEMBL2226"/>
<dbReference type="DrugBank" id="DB06255">
    <property type="generic name" value="Incadronic acid"/>
</dbReference>
<dbReference type="GuidetoPHARMACOLOGY" id="1620"/>
<dbReference type="MEROPS" id="C14.007"/>
<dbReference type="iPTMnet" id="P49662"/>
<dbReference type="MetOSite" id="P49662"/>
<dbReference type="PhosphoSitePlus" id="P49662"/>
<dbReference type="BioMuta" id="CASP4"/>
<dbReference type="DMDM" id="1352420"/>
<dbReference type="jPOST" id="P49662"/>
<dbReference type="MassIVE" id="P49662"/>
<dbReference type="PaxDb" id="9606-ENSP00000388566"/>
<dbReference type="PeptideAtlas" id="P49662"/>
<dbReference type="ProteomicsDB" id="56043">
    <molecule id="P49662-1"/>
</dbReference>
<dbReference type="ProteomicsDB" id="56044">
    <molecule id="P49662-2"/>
</dbReference>
<dbReference type="Pumba" id="P49662"/>
<dbReference type="Antibodypedia" id="18094">
    <property type="antibodies" value="731 antibodies from 42 providers"/>
</dbReference>
<dbReference type="DNASU" id="837"/>
<dbReference type="Ensembl" id="ENST00000393150.7">
    <molecule id="P49662-2"/>
    <property type="protein sequence ID" value="ENSP00000376857.3"/>
    <property type="gene ID" value="ENSG00000196954.14"/>
</dbReference>
<dbReference type="Ensembl" id="ENST00000444739.7">
    <molecule id="P49662-1"/>
    <property type="protein sequence ID" value="ENSP00000388566.2"/>
    <property type="gene ID" value="ENSG00000196954.14"/>
</dbReference>
<dbReference type="GeneID" id="837"/>
<dbReference type="KEGG" id="hsa:837"/>
<dbReference type="MANE-Select" id="ENST00000444739.7">
    <property type="protein sequence ID" value="ENSP00000388566.2"/>
    <property type="RefSeq nucleotide sequence ID" value="NM_001225.4"/>
    <property type="RefSeq protein sequence ID" value="NP_001216.1"/>
</dbReference>
<dbReference type="UCSC" id="uc001pib.2">
    <molecule id="P49662-1"/>
    <property type="organism name" value="human"/>
</dbReference>
<dbReference type="AGR" id="HGNC:1505"/>
<dbReference type="CTD" id="837"/>
<dbReference type="DisGeNET" id="837"/>
<dbReference type="GeneCards" id="CASP4"/>
<dbReference type="HGNC" id="HGNC:1505">
    <property type="gene designation" value="CASP4"/>
</dbReference>
<dbReference type="HPA" id="ENSG00000196954">
    <property type="expression patterns" value="Low tissue specificity"/>
</dbReference>
<dbReference type="MIM" id="602664">
    <property type="type" value="gene"/>
</dbReference>
<dbReference type="neXtProt" id="NX_P49662"/>
<dbReference type="OpenTargets" id="ENSG00000196954"/>
<dbReference type="PharmGKB" id="PA26088"/>
<dbReference type="VEuPathDB" id="HostDB:ENSG00000196954"/>
<dbReference type="eggNOG" id="KOG3573">
    <property type="taxonomic scope" value="Eukaryota"/>
</dbReference>
<dbReference type="GeneTree" id="ENSGT00940000161497"/>
<dbReference type="HOGENOM" id="CLU_036904_0_1_1"/>
<dbReference type="InParanoid" id="P49662"/>
<dbReference type="OMA" id="ACRGANH"/>
<dbReference type="OrthoDB" id="6097640at2759"/>
<dbReference type="PAN-GO" id="P49662">
    <property type="GO annotations" value="6 GO annotations based on evolutionary models"/>
</dbReference>
<dbReference type="PhylomeDB" id="P49662"/>
<dbReference type="TreeFam" id="TF102023"/>
<dbReference type="BioCyc" id="MetaCyc:HS06388-MONOMER"/>
<dbReference type="BRENDA" id="3.4.22.57">
    <property type="organism ID" value="2681"/>
</dbReference>
<dbReference type="PathwayCommons" id="P49662"/>
<dbReference type="Reactome" id="R-HSA-168638">
    <property type="pathway name" value="NOD1/2 Signaling Pathway"/>
</dbReference>
<dbReference type="Reactome" id="R-HSA-5620971">
    <property type="pathway name" value="Pyroptosis"/>
</dbReference>
<dbReference type="SABIO-RK" id="P49662"/>
<dbReference type="SignaLink" id="P49662"/>
<dbReference type="SIGNOR" id="P49662"/>
<dbReference type="BioGRID-ORCS" id="837">
    <property type="hits" value="15 hits in 1158 CRISPR screens"/>
</dbReference>
<dbReference type="ChiTaRS" id="CASP4">
    <property type="organism name" value="human"/>
</dbReference>
<dbReference type="GenomeRNAi" id="837"/>
<dbReference type="Pharos" id="P49662">
    <property type="development level" value="Tchem"/>
</dbReference>
<dbReference type="PRO" id="PR:P49662"/>
<dbReference type="Proteomes" id="UP000005640">
    <property type="component" value="Chromosome 11"/>
</dbReference>
<dbReference type="RNAct" id="P49662">
    <property type="molecule type" value="protein"/>
</dbReference>
<dbReference type="Bgee" id="ENSG00000196954">
    <property type="expression patterns" value="Expressed in monocyte and 178 other cell types or tissues"/>
</dbReference>
<dbReference type="ExpressionAtlas" id="P49662">
    <property type="expression patterns" value="baseline and differential"/>
</dbReference>
<dbReference type="GO" id="GO:0005737">
    <property type="term" value="C:cytoplasm"/>
    <property type="evidence" value="ECO:0000318"/>
    <property type="project" value="GO_Central"/>
</dbReference>
<dbReference type="GO" id="GO:0005829">
    <property type="term" value="C:cytosol"/>
    <property type="evidence" value="ECO:0000314"/>
    <property type="project" value="HPA"/>
</dbReference>
<dbReference type="GO" id="GO:0005783">
    <property type="term" value="C:endoplasmic reticulum"/>
    <property type="evidence" value="ECO:0000314"/>
    <property type="project" value="ParkinsonsUK-UCL"/>
</dbReference>
<dbReference type="GO" id="GO:0005789">
    <property type="term" value="C:endoplasmic reticulum membrane"/>
    <property type="evidence" value="ECO:0007669"/>
    <property type="project" value="UniProtKB-SubCell"/>
</dbReference>
<dbReference type="GO" id="GO:0005576">
    <property type="term" value="C:extracellular region"/>
    <property type="evidence" value="ECO:0007669"/>
    <property type="project" value="UniProtKB-SubCell"/>
</dbReference>
<dbReference type="GO" id="GO:0005739">
    <property type="term" value="C:mitochondrion"/>
    <property type="evidence" value="ECO:0000314"/>
    <property type="project" value="ParkinsonsUK-UCL"/>
</dbReference>
<dbReference type="GO" id="GO:0072558">
    <property type="term" value="C:NLRP1 inflammasome complex"/>
    <property type="evidence" value="ECO:0000318"/>
    <property type="project" value="GO_Central"/>
</dbReference>
<dbReference type="GO" id="GO:0160074">
    <property type="term" value="C:non-canonical inflammasome complex"/>
    <property type="evidence" value="ECO:0000314"/>
    <property type="project" value="UniProtKB"/>
</dbReference>
<dbReference type="GO" id="GO:0005886">
    <property type="term" value="C:plasma membrane"/>
    <property type="evidence" value="ECO:0000314"/>
    <property type="project" value="HPA"/>
</dbReference>
<dbReference type="GO" id="GO:0032991">
    <property type="term" value="C:protein-containing complex"/>
    <property type="evidence" value="ECO:0000314"/>
    <property type="project" value="UniProtKB"/>
</dbReference>
<dbReference type="GO" id="GO:0050700">
    <property type="term" value="F:CARD domain binding"/>
    <property type="evidence" value="ECO:0000353"/>
    <property type="project" value="UniProtKB"/>
</dbReference>
<dbReference type="GO" id="GO:0004197">
    <property type="term" value="F:cysteine-type endopeptidase activity"/>
    <property type="evidence" value="ECO:0000314"/>
    <property type="project" value="UniProtKB"/>
</dbReference>
<dbReference type="GO" id="GO:0008289">
    <property type="term" value="F:lipid binding"/>
    <property type="evidence" value="ECO:0000314"/>
    <property type="project" value="UniProtKB"/>
</dbReference>
<dbReference type="GO" id="GO:0001530">
    <property type="term" value="F:lipopolysaccharide binding"/>
    <property type="evidence" value="ECO:0000314"/>
    <property type="project" value="UniProtKB"/>
</dbReference>
<dbReference type="GO" id="GO:0006915">
    <property type="term" value="P:apoptotic process"/>
    <property type="evidence" value="ECO:0000304"/>
    <property type="project" value="ProtInc"/>
</dbReference>
<dbReference type="GO" id="GO:1904646">
    <property type="term" value="P:cellular response to amyloid-beta"/>
    <property type="evidence" value="ECO:0000315"/>
    <property type="project" value="ParkinsonsUK-UCL"/>
</dbReference>
<dbReference type="GO" id="GO:0042742">
    <property type="term" value="P:defense response to bacterium"/>
    <property type="evidence" value="ECO:0000314"/>
    <property type="project" value="UniProtKB"/>
</dbReference>
<dbReference type="GO" id="GO:0050830">
    <property type="term" value="P:defense response to Gram-positive bacterium"/>
    <property type="evidence" value="ECO:0000314"/>
    <property type="project" value="UniProtKB"/>
</dbReference>
<dbReference type="GO" id="GO:0045087">
    <property type="term" value="P:innate immune response"/>
    <property type="evidence" value="ECO:0007669"/>
    <property type="project" value="UniProtKB-KW"/>
</dbReference>
<dbReference type="GO" id="GO:0097193">
    <property type="term" value="P:intrinsic apoptotic signaling pathway"/>
    <property type="evidence" value="ECO:0000315"/>
    <property type="project" value="ParkinsonsUK-UCL"/>
</dbReference>
<dbReference type="GO" id="GO:0070059">
    <property type="term" value="P:intrinsic apoptotic signaling pathway in response to endoplasmic reticulum stress"/>
    <property type="evidence" value="ECO:0000315"/>
    <property type="project" value="ParkinsonsUK-UCL"/>
</dbReference>
<dbReference type="GO" id="GO:0160075">
    <property type="term" value="P:non-canonical inflammasome complex assembly"/>
    <property type="evidence" value="ECO:0000314"/>
    <property type="project" value="UniProtKB"/>
</dbReference>
<dbReference type="GO" id="GO:0050729">
    <property type="term" value="P:positive regulation of inflammatory response"/>
    <property type="evidence" value="ECO:0000314"/>
    <property type="project" value="UniProtKB"/>
</dbReference>
<dbReference type="GO" id="GO:2000494">
    <property type="term" value="P:positive regulation of interleukin-18-mediated signaling pathway"/>
    <property type="evidence" value="ECO:0000314"/>
    <property type="project" value="UniProtKB"/>
</dbReference>
<dbReference type="GO" id="GO:0043525">
    <property type="term" value="P:positive regulation of neuron apoptotic process"/>
    <property type="evidence" value="ECO:0000318"/>
    <property type="project" value="GO_Central"/>
</dbReference>
<dbReference type="GO" id="GO:1903265">
    <property type="term" value="P:positive regulation of tumor necrosis factor-mediated signaling pathway"/>
    <property type="evidence" value="ECO:0000314"/>
    <property type="project" value="UniProtKB"/>
</dbReference>
<dbReference type="GO" id="GO:0016540">
    <property type="term" value="P:protein autoprocessing"/>
    <property type="evidence" value="ECO:0000314"/>
    <property type="project" value="UniProtKB"/>
</dbReference>
<dbReference type="GO" id="GO:0051604">
    <property type="term" value="P:protein maturation"/>
    <property type="evidence" value="ECO:0000314"/>
    <property type="project" value="UniProt"/>
</dbReference>
<dbReference type="GO" id="GO:0006508">
    <property type="term" value="P:proteolysis"/>
    <property type="evidence" value="ECO:0000304"/>
    <property type="project" value="ProtInc"/>
</dbReference>
<dbReference type="GO" id="GO:0070269">
    <property type="term" value="P:pyroptotic inflammatory response"/>
    <property type="evidence" value="ECO:0000314"/>
    <property type="project" value="UniProtKB"/>
</dbReference>
<dbReference type="GO" id="GO:0050727">
    <property type="term" value="P:regulation of inflammatory response"/>
    <property type="evidence" value="ECO:0000314"/>
    <property type="project" value="UniProtKB"/>
</dbReference>
<dbReference type="CDD" id="cd08325">
    <property type="entry name" value="CARD_CASP1-like"/>
    <property type="match status" value="1"/>
</dbReference>
<dbReference type="CDD" id="cd00032">
    <property type="entry name" value="CASc"/>
    <property type="match status" value="1"/>
</dbReference>
<dbReference type="FunFam" id="3.30.70.1470:FF:000003">
    <property type="entry name" value="Caspase-1"/>
    <property type="match status" value="1"/>
</dbReference>
<dbReference type="FunFam" id="3.40.50.1460:FF:000007">
    <property type="entry name" value="Caspase-1"/>
    <property type="match status" value="1"/>
</dbReference>
<dbReference type="FunFam" id="1.10.533.10:FF:000073">
    <property type="entry name" value="Inactive caspase-12"/>
    <property type="match status" value="1"/>
</dbReference>
<dbReference type="Gene3D" id="3.40.50.1460">
    <property type="match status" value="1"/>
</dbReference>
<dbReference type="Gene3D" id="1.10.533.10">
    <property type="entry name" value="Death Domain, Fas"/>
    <property type="match status" value="1"/>
</dbReference>
<dbReference type="InterPro" id="IPR001315">
    <property type="entry name" value="CARD"/>
</dbReference>
<dbReference type="InterPro" id="IPR029030">
    <property type="entry name" value="Caspase-like_dom_sf"/>
</dbReference>
<dbReference type="InterPro" id="IPR033139">
    <property type="entry name" value="Caspase_cys_AS"/>
</dbReference>
<dbReference type="InterPro" id="IPR016129">
    <property type="entry name" value="Caspase_his_AS"/>
</dbReference>
<dbReference type="InterPro" id="IPR011029">
    <property type="entry name" value="DEATH-like_dom_sf"/>
</dbReference>
<dbReference type="InterPro" id="IPR002398">
    <property type="entry name" value="Pept_C14"/>
</dbReference>
<dbReference type="InterPro" id="IPR011600">
    <property type="entry name" value="Pept_C14_caspase"/>
</dbReference>
<dbReference type="InterPro" id="IPR002138">
    <property type="entry name" value="Pept_C14_p10"/>
</dbReference>
<dbReference type="InterPro" id="IPR001309">
    <property type="entry name" value="Pept_C14_p20"/>
</dbReference>
<dbReference type="InterPro" id="IPR015917">
    <property type="entry name" value="Pept_C14A"/>
</dbReference>
<dbReference type="PANTHER" id="PTHR47901">
    <property type="entry name" value="CASPASE RECRUITMENT DOMAIN-CONTAINING PROTEIN 18"/>
    <property type="match status" value="1"/>
</dbReference>
<dbReference type="PANTHER" id="PTHR47901:SF3">
    <property type="entry name" value="CASPASE-1"/>
    <property type="match status" value="1"/>
</dbReference>
<dbReference type="Pfam" id="PF00619">
    <property type="entry name" value="CARD"/>
    <property type="match status" value="1"/>
</dbReference>
<dbReference type="Pfam" id="PF00656">
    <property type="entry name" value="Peptidase_C14"/>
    <property type="match status" value="1"/>
</dbReference>
<dbReference type="PIRSF" id="PIRSF038001">
    <property type="entry name" value="Caspase_ICE"/>
    <property type="match status" value="1"/>
</dbReference>
<dbReference type="PRINTS" id="PR00376">
    <property type="entry name" value="IL1BCENZYME"/>
</dbReference>
<dbReference type="SMART" id="SM00114">
    <property type="entry name" value="CARD"/>
    <property type="match status" value="1"/>
</dbReference>
<dbReference type="SMART" id="SM00115">
    <property type="entry name" value="CASc"/>
    <property type="match status" value="1"/>
</dbReference>
<dbReference type="SUPFAM" id="SSF52129">
    <property type="entry name" value="Caspase-like"/>
    <property type="match status" value="1"/>
</dbReference>
<dbReference type="SUPFAM" id="SSF47986">
    <property type="entry name" value="DEATH domain"/>
    <property type="match status" value="1"/>
</dbReference>
<dbReference type="PROSITE" id="PS50209">
    <property type="entry name" value="CARD"/>
    <property type="match status" value="1"/>
</dbReference>
<dbReference type="PROSITE" id="PS01122">
    <property type="entry name" value="CASPASE_CYS"/>
    <property type="match status" value="1"/>
</dbReference>
<dbReference type="PROSITE" id="PS01121">
    <property type="entry name" value="CASPASE_HIS"/>
    <property type="match status" value="1"/>
</dbReference>
<dbReference type="PROSITE" id="PS50207">
    <property type="entry name" value="CASPASE_P10"/>
    <property type="match status" value="1"/>
</dbReference>
<dbReference type="PROSITE" id="PS50208">
    <property type="entry name" value="CASPASE_P20"/>
    <property type="match status" value="1"/>
</dbReference>
<organism>
    <name type="scientific">Homo sapiens</name>
    <name type="common">Human</name>
    <dbReference type="NCBI Taxonomy" id="9606"/>
    <lineage>
        <taxon>Eukaryota</taxon>
        <taxon>Metazoa</taxon>
        <taxon>Chordata</taxon>
        <taxon>Craniata</taxon>
        <taxon>Vertebrata</taxon>
        <taxon>Euteleostomi</taxon>
        <taxon>Mammalia</taxon>
        <taxon>Eutheria</taxon>
        <taxon>Euarchontoglires</taxon>
        <taxon>Primates</taxon>
        <taxon>Haplorrhini</taxon>
        <taxon>Catarrhini</taxon>
        <taxon>Hominidae</taxon>
        <taxon>Homo</taxon>
    </lineage>
</organism>
<sequence length="377" mass="43262">MAEGNHRKKPLKVLESLGKDFLTGVLDNLVEQNVLNWKEEEKKKYYDAKTEDKVRVMADSMQEKQRMAGQMLLQTFFNIDQISPNKKAHPNMEAGPPESGESTDALKLCPHEEFLRLCKERAEEIYPIKERNNRTRLALIICNTEFDHLPPRNGADFDITGMKELLEGLDYSVDVEENLTARDMESALRAFATRPEHKSSDSTFLVLMSHGILEGICGTVHDEKKPDVLLYDTIFQIFNNRNCLSLKDKPKVIIVQACRGANRGELWVRDSPASLEVASSQSSENLEEDAVYKTHVEKDFIAFCSSTPHNVSWRDSTMGSIFITQLITCFQKYSWCCHLEEVFRKVQQSFETPRAKAQMPTIERLSMTRYFYLFPGN</sequence>
<feature type="propeptide" id="PRO_0000004596" evidence="3">
    <location>
        <begin position="1"/>
        <end position="80" status="uncertain"/>
    </location>
</feature>
<feature type="chain" id="PRO_0000004597" description="Caspase-4 subunit p20" evidence="51 52">
    <location>
        <begin position="81" status="uncertain"/>
        <end position="270"/>
    </location>
</feature>
<feature type="propeptide" id="PRO_0000004598" evidence="3 53">
    <location>
        <begin position="271"/>
        <end position="289"/>
    </location>
</feature>
<feature type="chain" id="PRO_0000004599" description="Caspase-4 subunit p10" evidence="51 52">
    <location>
        <begin position="290"/>
        <end position="377"/>
    </location>
</feature>
<feature type="domain" description="CARD" evidence="4">
    <location>
        <begin position="1"/>
        <end position="91"/>
    </location>
</feature>
<feature type="region of interest" description="Required for LPS-binding" evidence="2">
    <location>
        <begin position="1"/>
        <end position="59"/>
    </location>
</feature>
<feature type="region of interest" description="Disordered" evidence="5">
    <location>
        <begin position="84"/>
        <end position="104"/>
    </location>
</feature>
<feature type="active site" evidence="1">
    <location>
        <position position="210"/>
    </location>
</feature>
<feature type="active site" evidence="12 14 16 38 39 40">
    <location>
        <position position="258"/>
    </location>
</feature>
<feature type="site" description="Cleavage; by autolysis" evidence="39 41">
    <location>
        <begin position="289"/>
        <end position="290"/>
    </location>
</feature>
<feature type="modified residue" description="Phosphoserine" evidence="63 64">
    <location>
        <position position="83"/>
    </location>
</feature>
<feature type="modified residue" description="(Microbial infection) ADP-riboxanated arginine" evidence="33 34 35">
    <location>
        <position position="314"/>
    </location>
</feature>
<feature type="splice variant" id="VSP_043495" description="In isoform 2." evidence="49">
    <location>
        <begin position="1"/>
        <end position="56"/>
    </location>
</feature>
<feature type="splice variant" id="VSP_058177" description="In isoform 3." evidence="49">
    <original>AHPNMEAGPPESGESTDALKLCPHEEFLR</original>
    <variation>GDKLGHRGRNHNLCSAISCSSSEYGGWTT</variation>
    <location>
        <begin position="88"/>
        <end position="116"/>
    </location>
</feature>
<feature type="splice variant" id="VSP_058178" description="In isoform 3." evidence="49">
    <location>
        <begin position="117"/>
        <end position="377"/>
    </location>
</feature>
<feature type="splice variant" id="VSP_058179" description="In isoform 5." evidence="44">
    <original>IYPIKERNNRTRLALIICNTEFDHLPPRNGADF</original>
    <variation>VLCYLYEIEKKEEISLLSFSAPFLTALNDWGWG</variation>
    <location>
        <begin position="125"/>
        <end position="157"/>
    </location>
</feature>
<feature type="splice variant" id="VSP_058180" description="In isoform 5." evidence="44">
    <location>
        <begin position="158"/>
        <end position="377"/>
    </location>
</feature>
<feature type="splice variant" id="VSP_058181" description="In isoform 4." evidence="43 44">
    <original>ANR</original>
    <variation>GEC</variation>
    <location>
        <begin position="261"/>
        <end position="263"/>
    </location>
</feature>
<feature type="splice variant" id="VSP_058182" description="In isoform 4." evidence="43 44">
    <location>
        <begin position="264"/>
        <end position="377"/>
    </location>
</feature>
<feature type="sequence variant" id="VAR_061081" description="In dbSNP:rs56226603.">
    <original>D</original>
    <variation>N</variation>
    <location>
        <position position="47"/>
    </location>
</feature>
<feature type="sequence variant" id="VAR_075654" description="In dbSNP:rs181090259." evidence="7">
    <original>R</original>
    <variation>C</variation>
    <location>
        <position position="134"/>
    </location>
</feature>
<feature type="sequence variant" id="VAR_061082" description="In dbSNP:rs55901059.">
    <original>E</original>
    <variation>D</variation>
    <location>
        <position position="284"/>
    </location>
</feature>
<feature type="mutagenesis site" description="Abolished ability to cleave IL18." evidence="39">
    <original>R</original>
    <variation>A</variation>
    <location>
        <position position="152"/>
    </location>
</feature>
<feature type="mutagenesis site" description="Abolished ability to cleave IL18; when associated with D-261." evidence="39">
    <original>I</original>
    <variation>D</variation>
    <location>
        <position position="212"/>
    </location>
</feature>
<feature type="mutagenesis site" description="Loss of enzymatic activity. Loss of LPS-induced pyroptosis. No effect on the interaction with LPS. Decrease in cell death induced by TMEM214 overexpression. Does not support IL1B and IL18 secretion following UVB irradiation." evidence="12 14 16 24 38 39">
    <original>C</original>
    <variation>A</variation>
    <location>
        <position position="258"/>
    </location>
</feature>
<feature type="mutagenesis site" description="Loss of autocatalysis." evidence="40">
    <original>C</original>
    <variation>S</variation>
    <location>
        <position position="258"/>
    </location>
</feature>
<feature type="mutagenesis site" description="Abolished ability to cleave IL18; when associated with D-212." evidence="39">
    <original>A</original>
    <variation>D</variation>
    <location>
        <position position="261"/>
    </location>
</feature>
<feature type="mutagenesis site" description="Abolished interaction with Gasdermin-D (GSDMD) and ability to mediate its cleavage. Abolished binding to IL18 and ability to mediate its cleavage." evidence="29 38 39">
    <original>W</original>
    <variation>L</variation>
    <variation>N</variation>
    <location>
        <position position="267"/>
    </location>
</feature>
<feature type="mutagenesis site" description="Abolished binding to IL18 and ability to mediate its cleavage." evidence="38">
    <original>R</original>
    <variation>D</variation>
    <location>
        <position position="269"/>
    </location>
</feature>
<feature type="mutagenesis site" description="Abolished autoprocessing and ability to form a heterotetramer composed of Caspase-4 subunit p10 and Caspase-4 subunit p20, preventing ability to cleave GSDMD and induce pyroptosis." evidence="29">
    <original>D</original>
    <variation>A</variation>
    <location>
        <position position="270"/>
    </location>
</feature>
<feature type="mutagenesis site" description="Abolished autoprocessing." evidence="39">
    <original>D</original>
    <variation>A</variation>
    <location>
        <position position="289"/>
    </location>
</feature>
<feature type="mutagenesis site" description="Abolished interaction with Gasdermin-D (GSDMD) and ability to mediate its cleavage. Strongly decreased ability to cleave IL18." evidence="29 39">
    <original>V</original>
    <variation>N</variation>
    <location>
        <position position="291"/>
    </location>
</feature>
<feature type="mutagenesis site" description="Strongly decreased ability to cleave IL18." evidence="39">
    <original>K</original>
    <variation>A</variation>
    <location>
        <position position="293"/>
    </location>
</feature>
<feature type="mutagenesis site" description="Abolished ability to cleave Gasdermin-D (GSDMD). Abolished ability to cleave IL18." evidence="33 39">
    <original>R</original>
    <variation>A</variation>
    <location>
        <position position="314"/>
    </location>
</feature>
<feature type="mutagenesis site" description="Abolished ability to cleave IL18." evidence="39">
    <original>I</original>
    <variation>D</variation>
    <location>
        <position position="321"/>
    </location>
</feature>
<feature type="mutagenesis site" description="Abolished binding to IL18 and ability to mediate its cleavage." evidence="38">
    <original>K</original>
    <variation>D</variation>
    <location>
        <position position="356"/>
    </location>
</feature>
<feature type="helix" evidence="68">
    <location>
        <begin position="111"/>
        <end position="120"/>
    </location>
</feature>
<feature type="helix" evidence="68">
    <location>
        <begin position="122"/>
        <end position="124"/>
    </location>
</feature>
<feature type="helix" evidence="68">
    <location>
        <begin position="131"/>
        <end position="133"/>
    </location>
</feature>
<feature type="strand" evidence="68">
    <location>
        <begin position="136"/>
        <end position="142"/>
    </location>
</feature>
<feature type="strand" evidence="68">
    <location>
        <begin position="147"/>
        <end position="149"/>
    </location>
</feature>
<feature type="helix" evidence="68">
    <location>
        <begin position="155"/>
        <end position="168"/>
    </location>
</feature>
<feature type="strand" evidence="68">
    <location>
        <begin position="171"/>
        <end position="178"/>
    </location>
</feature>
<feature type="helix" evidence="68">
    <location>
        <begin position="181"/>
        <end position="192"/>
    </location>
</feature>
<feature type="helix" evidence="68">
    <location>
        <begin position="195"/>
        <end position="197"/>
    </location>
</feature>
<feature type="strand" evidence="68">
    <location>
        <begin position="203"/>
        <end position="211"/>
    </location>
</feature>
<feature type="strand" evidence="68">
    <location>
        <begin position="213"/>
        <end position="217"/>
    </location>
</feature>
<feature type="strand" evidence="68">
    <location>
        <begin position="223"/>
        <end position="225"/>
    </location>
</feature>
<feature type="strand" evidence="68">
    <location>
        <begin position="228"/>
        <end position="230"/>
    </location>
</feature>
<feature type="helix" evidence="68">
    <location>
        <begin position="231"/>
        <end position="237"/>
    </location>
</feature>
<feature type="turn" evidence="68">
    <location>
        <begin position="240"/>
        <end position="242"/>
    </location>
</feature>
<feature type="helix" evidence="68">
    <location>
        <begin position="244"/>
        <end position="246"/>
    </location>
</feature>
<feature type="strand" evidence="68">
    <location>
        <begin position="251"/>
        <end position="259"/>
    </location>
</feature>
<feature type="strand" evidence="69">
    <location>
        <begin position="266"/>
        <end position="269"/>
    </location>
</feature>
<feature type="helix" evidence="68">
    <location>
        <begin position="293"/>
        <end position="296"/>
    </location>
</feature>
<feature type="strand" evidence="68">
    <location>
        <begin position="299"/>
        <end position="305"/>
    </location>
</feature>
<feature type="helix" evidence="67">
    <location>
        <begin position="309"/>
        <end position="311"/>
    </location>
</feature>
<feature type="helix" evidence="66">
    <location>
        <begin position="313"/>
        <end position="316"/>
    </location>
</feature>
<feature type="strand" evidence="67">
    <location>
        <begin position="317"/>
        <end position="320"/>
    </location>
</feature>
<feature type="helix" evidence="68">
    <location>
        <begin position="321"/>
        <end position="333"/>
    </location>
</feature>
<feature type="turn" evidence="68">
    <location>
        <begin position="334"/>
        <end position="336"/>
    </location>
</feature>
<feature type="helix" evidence="68">
    <location>
        <begin position="339"/>
        <end position="349"/>
    </location>
</feature>
<feature type="turn" evidence="68">
    <location>
        <begin position="353"/>
        <end position="355"/>
    </location>
</feature>
<feature type="helix" evidence="68">
    <location>
        <begin position="356"/>
        <end position="358"/>
    </location>
</feature>
<feature type="strand" evidence="68">
    <location>
        <begin position="361"/>
        <end position="364"/>
    </location>
</feature>
<feature type="strand" evidence="68">
    <location>
        <begin position="368"/>
        <end position="370"/>
    </location>
</feature>
<feature type="initiator methionine" description="Removed" evidence="65">
    <location sequence="P49662-2">
        <position position="1"/>
    </location>
</feature>
<feature type="modified residue" description="N-acetylalanine" evidence="65">
    <location sequence="P49662-2">
        <position position="2"/>
    </location>
</feature>
<protein>
    <recommendedName>
        <fullName evidence="45">Caspase-4</fullName>
        <shortName evidence="45">CASP-4</shortName>
        <ecNumber evidence="13 38 39 41">3.4.22.57</ecNumber>
    </recommendedName>
    <alternativeName>
        <fullName evidence="47">ICE and Ced-3 homolog 2</fullName>
        <shortName evidence="47">ICH-2</shortName>
    </alternativeName>
    <alternativeName>
        <fullName evidence="48">ICE(rel)-II</fullName>
    </alternativeName>
    <alternativeName>
        <fullName evidence="49">Mih1</fullName>
    </alternativeName>
    <alternativeName>
        <fullName evidence="46">Protease TX</fullName>
    </alternativeName>
    <component>
        <recommendedName>
            <fullName>Caspase-4 subunit p10</fullName>
        </recommendedName>
    </component>
    <component>
        <recommendedName>
            <fullName>Caspase-4 subunit p20</fullName>
        </recommendedName>
    </component>
</protein>
<keyword id="KW-0002">3D-structure</keyword>
<keyword id="KW-0007">Acetylation</keyword>
<keyword id="KW-0025">Alternative splicing</keyword>
<keyword id="KW-0963">Cytoplasm</keyword>
<keyword id="KW-0256">Endoplasmic reticulum</keyword>
<keyword id="KW-0378">Hydrolase</keyword>
<keyword id="KW-0391">Immunity</keyword>
<keyword id="KW-1271">Inflammasome</keyword>
<keyword id="KW-0395">Inflammatory response</keyword>
<keyword id="KW-0399">Innate immunity</keyword>
<keyword id="KW-0472">Membrane</keyword>
<keyword id="KW-0496">Mitochondrion</keyword>
<keyword id="KW-1210">Necrosis</keyword>
<keyword id="KW-0597">Phosphoprotein</keyword>
<keyword id="KW-0645">Protease</keyword>
<keyword id="KW-1267">Proteomics identification</keyword>
<keyword id="KW-1185">Reference proteome</keyword>
<keyword id="KW-0964">Secreted</keyword>
<keyword id="KW-0788">Thiol protease</keyword>
<keyword id="KW-0865">Zymogen</keyword>
<evidence type="ECO:0000250" key="1">
    <source>
        <dbReference type="UniProtKB" id="P29466"/>
    </source>
</evidence>
<evidence type="ECO:0000250" key="2">
    <source>
        <dbReference type="UniProtKB" id="P70343"/>
    </source>
</evidence>
<evidence type="ECO:0000255" key="3"/>
<evidence type="ECO:0000255" key="4">
    <source>
        <dbReference type="PROSITE-ProRule" id="PRU00046"/>
    </source>
</evidence>
<evidence type="ECO:0000256" key="5">
    <source>
        <dbReference type="SAM" id="MobiDB-lite"/>
    </source>
</evidence>
<evidence type="ECO:0000269" key="6">
    <source>
    </source>
</evidence>
<evidence type="ECO:0000269" key="7">
    <source>
    </source>
</evidence>
<evidence type="ECO:0000269" key="8">
    <source>
    </source>
</evidence>
<evidence type="ECO:0000269" key="9">
    <source>
    </source>
</evidence>
<evidence type="ECO:0000269" key="10">
    <source>
    </source>
</evidence>
<evidence type="ECO:0000269" key="11">
    <source>
    </source>
</evidence>
<evidence type="ECO:0000269" key="12">
    <source>
    </source>
</evidence>
<evidence type="ECO:0000269" key="13">
    <source>
    </source>
</evidence>
<evidence type="ECO:0000269" key="14">
    <source>
    </source>
</evidence>
<evidence type="ECO:0000269" key="15">
    <source>
    </source>
</evidence>
<evidence type="ECO:0000269" key="16">
    <source>
    </source>
</evidence>
<evidence type="ECO:0000269" key="17">
    <source>
    </source>
</evidence>
<evidence type="ECO:0000269" key="18">
    <source>
    </source>
</evidence>
<evidence type="ECO:0000269" key="19">
    <source>
    </source>
</evidence>
<evidence type="ECO:0000269" key="20">
    <source>
    </source>
</evidence>
<evidence type="ECO:0000269" key="21">
    <source>
    </source>
</evidence>
<evidence type="ECO:0000269" key="22">
    <source>
    </source>
</evidence>
<evidence type="ECO:0000269" key="23">
    <source>
    </source>
</evidence>
<evidence type="ECO:0000269" key="24">
    <source>
    </source>
</evidence>
<evidence type="ECO:0000269" key="25">
    <source>
    </source>
</evidence>
<evidence type="ECO:0000269" key="26">
    <source>
    </source>
</evidence>
<evidence type="ECO:0000269" key="27">
    <source>
    </source>
</evidence>
<evidence type="ECO:0000269" key="28">
    <source>
    </source>
</evidence>
<evidence type="ECO:0000269" key="29">
    <source>
    </source>
</evidence>
<evidence type="ECO:0000269" key="30">
    <source>
    </source>
</evidence>
<evidence type="ECO:0000269" key="31">
    <source>
    </source>
</evidence>
<evidence type="ECO:0000269" key="32">
    <source>
    </source>
</evidence>
<evidence type="ECO:0000269" key="33">
    <source>
    </source>
</evidence>
<evidence type="ECO:0000269" key="34">
    <source>
    </source>
</evidence>
<evidence type="ECO:0000269" key="35">
    <source>
    </source>
</evidence>
<evidence type="ECO:0000269" key="36">
    <source>
    </source>
</evidence>
<evidence type="ECO:0000269" key="37">
    <source>
    </source>
</evidence>
<evidence type="ECO:0000269" key="38">
    <source>
    </source>
</evidence>
<evidence type="ECO:0000269" key="39">
    <source>
    </source>
</evidence>
<evidence type="ECO:0000269" key="40">
    <source>
    </source>
</evidence>
<evidence type="ECO:0000269" key="41">
    <source>
    </source>
</evidence>
<evidence type="ECO:0000269" key="42">
    <source>
    </source>
</evidence>
<evidence type="ECO:0000303" key="43">
    <source>
    </source>
</evidence>
<evidence type="ECO:0000303" key="44">
    <source>
    </source>
</evidence>
<evidence type="ECO:0000303" key="45">
    <source>
    </source>
</evidence>
<evidence type="ECO:0000303" key="46">
    <source>
    </source>
</evidence>
<evidence type="ECO:0000303" key="47">
    <source>
    </source>
</evidence>
<evidence type="ECO:0000303" key="48">
    <source>
    </source>
</evidence>
<evidence type="ECO:0000303" key="49">
    <source ref="4"/>
</evidence>
<evidence type="ECO:0000305" key="50"/>
<evidence type="ECO:0000305" key="51">
    <source>
    </source>
</evidence>
<evidence type="ECO:0000305" key="52">
    <source>
    </source>
</evidence>
<evidence type="ECO:0000305" key="53">
    <source>
    </source>
</evidence>
<evidence type="ECO:0000312" key="54">
    <source>
        <dbReference type="HGNC" id="HGNC:1505"/>
    </source>
</evidence>
<evidence type="ECO:0007744" key="55">
    <source>
        <dbReference type="PDB" id="6KMZ"/>
    </source>
</evidence>
<evidence type="ECO:0007744" key="56">
    <source>
        <dbReference type="PDB" id="7WR0"/>
    </source>
</evidence>
<evidence type="ECO:0007744" key="57">
    <source>
        <dbReference type="PDB" id="7WR1"/>
    </source>
</evidence>
<evidence type="ECO:0007744" key="58">
    <source>
        <dbReference type="PDB" id="7WR4"/>
    </source>
</evidence>
<evidence type="ECO:0007744" key="59">
    <source>
        <dbReference type="PDB" id="7WR5"/>
    </source>
</evidence>
<evidence type="ECO:0007744" key="60">
    <source>
        <dbReference type="PDB" id="7WR6"/>
    </source>
</evidence>
<evidence type="ECO:0007744" key="61">
    <source>
        <dbReference type="PDB" id="8J6K"/>
    </source>
</evidence>
<evidence type="ECO:0007744" key="62">
    <source>
        <dbReference type="PDB" id="8SPB"/>
    </source>
</evidence>
<evidence type="ECO:0007744" key="63">
    <source>
    </source>
</evidence>
<evidence type="ECO:0007744" key="64">
    <source>
    </source>
</evidence>
<evidence type="ECO:0007744" key="65">
    <source>
    </source>
</evidence>
<evidence type="ECO:0007829" key="66">
    <source>
        <dbReference type="PDB" id="6NRY"/>
    </source>
</evidence>
<evidence type="ECO:0007829" key="67">
    <source>
        <dbReference type="PDB" id="7WR0"/>
    </source>
</evidence>
<evidence type="ECO:0007829" key="68">
    <source>
        <dbReference type="PDB" id="7WR6"/>
    </source>
</evidence>
<evidence type="ECO:0007829" key="69">
    <source>
        <dbReference type="PDB" id="8SPB"/>
    </source>
</evidence>
<reference key="1">
    <citation type="journal article" date="1995" name="EMBO J.">
        <title>A novel human protease similar to the interleukin-1 beta converting enzyme induces apoptosis in transfected cells.</title>
        <authorList>
            <person name="Faucheu C."/>
            <person name="Diu A."/>
            <person name="Chan A.W.E."/>
            <person name="Blanchet A.-M."/>
            <person name="Miossec C."/>
            <person name="Herve F."/>
            <person name="Collard-Dutilleul V."/>
            <person name="Gu Y."/>
            <person name="Aldape R.A."/>
            <person name="Lippke J.A."/>
            <person name="Rocher C."/>
            <person name="Su M.S.-S."/>
            <person name="Livingston D.J."/>
            <person name="Hercend T."/>
            <person name="Lalanne J.-L."/>
        </authorList>
    </citation>
    <scope>NUCLEOTIDE SEQUENCE [MRNA] (ISOFORM 1)</scope>
    <scope>FUNCTION</scope>
    <scope>MUTAGENESIS OF CYS-258</scope>
    <scope>3D-STRUCTURE MODELING</scope>
    <scope>AUTOCATALYSIS</scope>
    <scope>TISSUE SPECIFICITY</scope>
    <source>
        <tissue>Placenta</tissue>
    </source>
</reference>
<reference key="2">
    <citation type="journal article" date="1995" name="J. Biol. Chem.">
        <title>Molecular cloning and pro-apoptotic activity of ICErelII and ICErelIII, members of the ICE/CED-3 family of cysteine proteases.</title>
        <authorList>
            <person name="Munday N.A."/>
            <person name="Vaillancourt J.P."/>
            <person name="Ali A."/>
            <person name="Casano F.J."/>
            <person name="Miller D.K."/>
            <person name="Molineaux S.M."/>
            <person name="Yamin T.-T."/>
            <person name="Yu V.L."/>
            <person name="Nicholson D.W."/>
        </authorList>
    </citation>
    <scope>NUCLEOTIDE SEQUENCE [MRNA] (ISOFORM 1)</scope>
    <scope>FUNCTION</scope>
    <scope>TISSUE SPECIFICITY</scope>
    <source>
        <tissue>Monocytic leukemia</tissue>
    </source>
</reference>
<reference key="3">
    <citation type="journal article" date="1995" name="J. Biol. Chem.">
        <title>Identification and characterization of ICH-2, a novel member of the interleukin-1 beta-converting enzyme family of cysteine proteases.</title>
        <authorList>
            <person name="Kamens J."/>
            <person name="Paskind M."/>
            <person name="Hugunin M."/>
            <person name="Talanian R.V."/>
            <person name="Allen H."/>
            <person name="Banach D."/>
            <person name="Bump N.J."/>
            <person name="Hackett M.C."/>
            <person name="Johnston C.G."/>
            <person name="Li P."/>
            <person name="Mankovich J.A."/>
            <person name="Terranova M."/>
            <person name="Ghayur T."/>
        </authorList>
    </citation>
    <scope>NUCLEOTIDE SEQUENCE [MRNA] (ISOFORM 1)</scope>
    <scope>FUNCTION</scope>
    <scope>CATALYTIC ACTIVITY</scope>
    <scope>TISSUE SPECIFICITY</scope>
    <scope>AUTOCATALYTIC CLEAVAGE AT ASP-289</scope>
    <scope>BIOPHYSICOCHEMICAL PROPERTIES</scope>
    <source>
        <tissue>Thymus</tissue>
    </source>
</reference>
<reference key="4">
    <citation type="submission" date="1995-06" db="EMBL/GenBank/DDBJ databases">
        <title>Cloning of human ICE homolog Mih1.</title>
        <authorList>
            <person name="Fernandes-Alnemri T."/>
            <person name="Litwack G."/>
            <person name="Alnemri E.S."/>
        </authorList>
    </citation>
    <scope>NUCLEOTIDE SEQUENCE [MRNA] (ISOFORMS 1; 2 AND 3)</scope>
    <source>
        <tissue>T-cell</tissue>
    </source>
</reference>
<reference key="5">
    <citation type="journal article" date="2004" name="Nat. Genet.">
        <title>Complete sequencing and characterization of 21,243 full-length human cDNAs.</title>
        <authorList>
            <person name="Ota T."/>
            <person name="Suzuki Y."/>
            <person name="Nishikawa T."/>
            <person name="Otsuki T."/>
            <person name="Sugiyama T."/>
            <person name="Irie R."/>
            <person name="Wakamatsu A."/>
            <person name="Hayashi K."/>
            <person name="Sato H."/>
            <person name="Nagai K."/>
            <person name="Kimura K."/>
            <person name="Makita H."/>
            <person name="Sekine M."/>
            <person name="Obayashi M."/>
            <person name="Nishi T."/>
            <person name="Shibahara T."/>
            <person name="Tanaka T."/>
            <person name="Ishii S."/>
            <person name="Yamamoto J."/>
            <person name="Saito K."/>
            <person name="Kawai Y."/>
            <person name="Isono Y."/>
            <person name="Nakamura Y."/>
            <person name="Nagahari K."/>
            <person name="Murakami K."/>
            <person name="Yasuda T."/>
            <person name="Iwayanagi T."/>
            <person name="Wagatsuma M."/>
            <person name="Shiratori A."/>
            <person name="Sudo H."/>
            <person name="Hosoiri T."/>
            <person name="Kaku Y."/>
            <person name="Kodaira H."/>
            <person name="Kondo H."/>
            <person name="Sugawara M."/>
            <person name="Takahashi M."/>
            <person name="Kanda K."/>
            <person name="Yokoi T."/>
            <person name="Furuya T."/>
            <person name="Kikkawa E."/>
            <person name="Omura Y."/>
            <person name="Abe K."/>
            <person name="Kamihara K."/>
            <person name="Katsuta N."/>
            <person name="Sato K."/>
            <person name="Tanikawa M."/>
            <person name="Yamazaki M."/>
            <person name="Ninomiya K."/>
            <person name="Ishibashi T."/>
            <person name="Yamashita H."/>
            <person name="Murakawa K."/>
            <person name="Fujimori K."/>
            <person name="Tanai H."/>
            <person name="Kimata M."/>
            <person name="Watanabe M."/>
            <person name="Hiraoka S."/>
            <person name="Chiba Y."/>
            <person name="Ishida S."/>
            <person name="Ono Y."/>
            <person name="Takiguchi S."/>
            <person name="Watanabe S."/>
            <person name="Yosida M."/>
            <person name="Hotuta T."/>
            <person name="Kusano J."/>
            <person name="Kanehori K."/>
            <person name="Takahashi-Fujii A."/>
            <person name="Hara H."/>
            <person name="Tanase T.-O."/>
            <person name="Nomura Y."/>
            <person name="Togiya S."/>
            <person name="Komai F."/>
            <person name="Hara R."/>
            <person name="Takeuchi K."/>
            <person name="Arita M."/>
            <person name="Imose N."/>
            <person name="Musashino K."/>
            <person name="Yuuki H."/>
            <person name="Oshima A."/>
            <person name="Sasaki N."/>
            <person name="Aotsuka S."/>
            <person name="Yoshikawa Y."/>
            <person name="Matsunawa H."/>
            <person name="Ichihara T."/>
            <person name="Shiohata N."/>
            <person name="Sano S."/>
            <person name="Moriya S."/>
            <person name="Momiyama H."/>
            <person name="Satoh N."/>
            <person name="Takami S."/>
            <person name="Terashima Y."/>
            <person name="Suzuki O."/>
            <person name="Nakagawa S."/>
            <person name="Senoh A."/>
            <person name="Mizoguchi H."/>
            <person name="Goto Y."/>
            <person name="Shimizu F."/>
            <person name="Wakebe H."/>
            <person name="Hishigaki H."/>
            <person name="Watanabe T."/>
            <person name="Sugiyama A."/>
            <person name="Takemoto M."/>
            <person name="Kawakami B."/>
            <person name="Yamazaki M."/>
            <person name="Watanabe K."/>
            <person name="Kumagai A."/>
            <person name="Itakura S."/>
            <person name="Fukuzumi Y."/>
            <person name="Fujimori Y."/>
            <person name="Komiyama M."/>
            <person name="Tashiro H."/>
            <person name="Tanigami A."/>
            <person name="Fujiwara T."/>
            <person name="Ono T."/>
            <person name="Yamada K."/>
            <person name="Fujii Y."/>
            <person name="Ozaki K."/>
            <person name="Hirao M."/>
            <person name="Ohmori Y."/>
            <person name="Kawabata A."/>
            <person name="Hikiji T."/>
            <person name="Kobatake N."/>
            <person name="Inagaki H."/>
            <person name="Ikema Y."/>
            <person name="Okamoto S."/>
            <person name="Okitani R."/>
            <person name="Kawakami T."/>
            <person name="Noguchi S."/>
            <person name="Itoh T."/>
            <person name="Shigeta K."/>
            <person name="Senba T."/>
            <person name="Matsumura K."/>
            <person name="Nakajima Y."/>
            <person name="Mizuno T."/>
            <person name="Morinaga M."/>
            <person name="Sasaki M."/>
            <person name="Togashi T."/>
            <person name="Oyama M."/>
            <person name="Hata H."/>
            <person name="Watanabe M."/>
            <person name="Komatsu T."/>
            <person name="Mizushima-Sugano J."/>
            <person name="Satoh T."/>
            <person name="Shirai Y."/>
            <person name="Takahashi Y."/>
            <person name="Nakagawa K."/>
            <person name="Okumura K."/>
            <person name="Nagase T."/>
            <person name="Nomura N."/>
            <person name="Kikuchi H."/>
            <person name="Masuho Y."/>
            <person name="Yamashita R."/>
            <person name="Nakai K."/>
            <person name="Yada T."/>
            <person name="Nakamura Y."/>
            <person name="Ohara O."/>
            <person name="Isogai T."/>
            <person name="Sugano S."/>
        </authorList>
    </citation>
    <scope>NUCLEOTIDE SEQUENCE [LARGE SCALE MRNA] (ISOFORMS 1; 4 AND 5)</scope>
    <scope>VARIANT CYS-134</scope>
    <source>
        <tissue>Small intestine</tissue>
        <tissue>Trachea</tissue>
    </source>
</reference>
<reference key="6">
    <citation type="submission" date="2007-05" db="EMBL/GenBank/DDBJ databases">
        <authorList>
            <consortium name="NIEHS SNPs program"/>
        </authorList>
    </citation>
    <scope>NUCLEOTIDE SEQUENCE [GENOMIC DNA]</scope>
</reference>
<reference key="7">
    <citation type="journal article" date="2006" name="Nature">
        <title>Human chromosome 11 DNA sequence and analysis including novel gene identification.</title>
        <authorList>
            <person name="Taylor T.D."/>
            <person name="Noguchi H."/>
            <person name="Totoki Y."/>
            <person name="Toyoda A."/>
            <person name="Kuroki Y."/>
            <person name="Dewar K."/>
            <person name="Lloyd C."/>
            <person name="Itoh T."/>
            <person name="Takeda T."/>
            <person name="Kim D.-W."/>
            <person name="She X."/>
            <person name="Barlow K.F."/>
            <person name="Bloom T."/>
            <person name="Bruford E."/>
            <person name="Chang J.L."/>
            <person name="Cuomo C.A."/>
            <person name="Eichler E."/>
            <person name="FitzGerald M.G."/>
            <person name="Jaffe D.B."/>
            <person name="LaButti K."/>
            <person name="Nicol R."/>
            <person name="Park H.-S."/>
            <person name="Seaman C."/>
            <person name="Sougnez C."/>
            <person name="Yang X."/>
            <person name="Zimmer A.R."/>
            <person name="Zody M.C."/>
            <person name="Birren B.W."/>
            <person name="Nusbaum C."/>
            <person name="Fujiyama A."/>
            <person name="Hattori M."/>
            <person name="Rogers J."/>
            <person name="Lander E.S."/>
            <person name="Sakaki Y."/>
        </authorList>
    </citation>
    <scope>NUCLEOTIDE SEQUENCE [LARGE SCALE GENOMIC DNA]</scope>
</reference>
<reference key="8">
    <citation type="submission" date="2005-07" db="EMBL/GenBank/DDBJ databases">
        <authorList>
            <person name="Mural R.J."/>
            <person name="Istrail S."/>
            <person name="Sutton G."/>
            <person name="Florea L."/>
            <person name="Halpern A.L."/>
            <person name="Mobarry C.M."/>
            <person name="Lippert R."/>
            <person name="Walenz B."/>
            <person name="Shatkay H."/>
            <person name="Dew I."/>
            <person name="Miller J.R."/>
            <person name="Flanigan M.J."/>
            <person name="Edwards N.J."/>
            <person name="Bolanos R."/>
            <person name="Fasulo D."/>
            <person name="Halldorsson B.V."/>
            <person name="Hannenhalli S."/>
            <person name="Turner R."/>
            <person name="Yooseph S."/>
            <person name="Lu F."/>
            <person name="Nusskern D.R."/>
            <person name="Shue B.C."/>
            <person name="Zheng X.H."/>
            <person name="Zhong F."/>
            <person name="Delcher A.L."/>
            <person name="Huson D.H."/>
            <person name="Kravitz S.A."/>
            <person name="Mouchard L."/>
            <person name="Reinert K."/>
            <person name="Remington K.A."/>
            <person name="Clark A.G."/>
            <person name="Waterman M.S."/>
            <person name="Eichler E.E."/>
            <person name="Adams M.D."/>
            <person name="Hunkapiller M.W."/>
            <person name="Myers E.W."/>
            <person name="Venter J.C."/>
        </authorList>
    </citation>
    <scope>NUCLEOTIDE SEQUENCE [LARGE SCALE GENOMIC DNA]</scope>
</reference>
<reference key="9">
    <citation type="journal article" date="2004" name="Genome Res.">
        <title>The status, quality, and expansion of the NIH full-length cDNA project: the Mammalian Gene Collection (MGC).</title>
        <authorList>
            <consortium name="The MGC Project Team"/>
        </authorList>
    </citation>
    <scope>NUCLEOTIDE SEQUENCE [LARGE SCALE MRNA] (ISOFORM 1)</scope>
    <source>
        <tissue>Testis</tissue>
    </source>
</reference>
<reference key="10">
    <citation type="journal article" date="2001" name="Genome Res.">
        <title>Towards a catalog of human genes and proteins: sequencing and analysis of 500 novel complete protein coding human cDNAs.</title>
        <authorList>
            <person name="Wiemann S."/>
            <person name="Weil B."/>
            <person name="Wellenreuther R."/>
            <person name="Gassenhuber J."/>
            <person name="Glassl S."/>
            <person name="Ansorge W."/>
            <person name="Boecher M."/>
            <person name="Bloecker H."/>
            <person name="Bauersachs S."/>
            <person name="Blum H."/>
            <person name="Lauber J."/>
            <person name="Duesterhoeft A."/>
            <person name="Beyer A."/>
            <person name="Koehrer K."/>
            <person name="Strack N."/>
            <person name="Mewes H.-W."/>
            <person name="Ottenwaelder B."/>
            <person name="Obermaier B."/>
            <person name="Tampe J."/>
            <person name="Heubner D."/>
            <person name="Wambutt R."/>
            <person name="Korn B."/>
            <person name="Klein M."/>
            <person name="Poustka A."/>
        </authorList>
    </citation>
    <scope>NUCLEOTIDE SEQUENCE [LARGE SCALE MRNA] OF 161-263 (ISOFORM 4)</scope>
    <source>
        <tissue>Uterus</tissue>
    </source>
</reference>
<reference key="11">
    <citation type="journal article" date="2000" name="J. Biol. Chem.">
        <title>Expression analysis of the human caspase-1 subfamily reveals specific regulation of the CASP5 gene by lipopolysaccharide and interferon-gamma.</title>
        <authorList>
            <person name="Lin X.Y."/>
            <person name="Choi M.S."/>
            <person name="Porter A.G."/>
        </authorList>
    </citation>
    <scope>TISSUE SPECIFICITY</scope>
</reference>
<reference key="12">
    <citation type="journal article" date="2004" name="J. Cell Biol.">
        <title>Involvement of caspase-4 in endoplasmic reticulum stress-induced apoptosis and Abeta-induced cell death.</title>
        <authorList>
            <person name="Hitomi J."/>
            <person name="Katayama T."/>
            <person name="Eguchi Y."/>
            <person name="Kudo T."/>
            <person name="Taniguchi M."/>
            <person name="Koyama Y."/>
            <person name="Manabe T."/>
            <person name="Yamagishi S."/>
            <person name="Bando Y."/>
            <person name="Imaizumi K."/>
            <person name="Tsujimoto Y."/>
            <person name="Tohyama M."/>
        </authorList>
    </citation>
    <scope>FUNCTION</scope>
    <scope>SUBCELLULAR LOCATION</scope>
    <scope>CLEAVAGE IN RESPONSE TO ENDOPLASMIC RETICULUM STRESS</scope>
</reference>
<reference key="13">
    <citation type="journal article" date="2004" name="Oncogene">
        <title>A novel isoform of pro-interleukin-18 expressed in ovarian tumors is resistant to caspase-1 and -4 processing.</title>
        <authorList>
            <person name="Gaggero A."/>
            <person name="De Ambrosis A."/>
            <person name="Mezzanzanica D."/>
            <person name="Piazza T."/>
            <person name="Rubartelli A."/>
            <person name="Figini M."/>
            <person name="Canevari S."/>
            <person name="Ferrini S."/>
        </authorList>
    </citation>
    <scope>FUNCTION</scope>
</reference>
<reference key="14">
    <citation type="journal article" date="2006" name="Biochem. Biophys. Res. Commun.">
        <title>Identification of a novel exon encoding the amino-terminus of the predominant caspase-5 variants.</title>
        <authorList>
            <person name="Eckhart L."/>
            <person name="Kittel C."/>
            <person name="Gawlas S."/>
            <person name="Gruber F."/>
            <person name="Mildner M."/>
            <person name="Jilma B."/>
            <person name="Tschachler E."/>
        </authorList>
    </citation>
    <scope>INDUCTION BY LPS</scope>
</reference>
<reference key="15">
    <citation type="journal article" date="2008" name="Proc. Natl. Acad. Sci. U.S.A.">
        <title>A quantitative atlas of mitotic phosphorylation.</title>
        <authorList>
            <person name="Dephoure N."/>
            <person name="Zhou C."/>
            <person name="Villen J."/>
            <person name="Beausoleil S.A."/>
            <person name="Bakalarski C.E."/>
            <person name="Elledge S.J."/>
            <person name="Gygi S.P."/>
        </authorList>
    </citation>
    <scope>PHOSPHORYLATION [LARGE SCALE ANALYSIS] AT SER-83</scope>
    <scope>IDENTIFICATION BY MASS SPECTROMETRY [LARGE SCALE ANALYSIS]</scope>
    <source>
        <tissue>Cervix carcinoma</tissue>
    </source>
</reference>
<reference key="16">
    <citation type="journal article" date="2008" name="Proc. Natl. Acad. Sci. U.S.A.">
        <title>A NOD2-NALP1 complex mediates caspase-1-dependent IL-1beta secretion in response to Bacillus anthracis infection and muramyl dipeptide.</title>
        <authorList>
            <person name="Hsu L.C."/>
            <person name="Ali S.R."/>
            <person name="McGillivray S."/>
            <person name="Tseng P.H."/>
            <person name="Mariathasan S."/>
            <person name="Humke E.W."/>
            <person name="Eckmann L."/>
            <person name="Powell J.J."/>
            <person name="Nizet V."/>
            <person name="Dixit V.M."/>
            <person name="Karin M."/>
        </authorList>
    </citation>
    <scope>INTERACTION WITH NOD2</scope>
</reference>
<reference key="17">
    <citation type="journal article" date="2010" name="Sci. Signal.">
        <title>Quantitative phosphoproteomics reveals widespread full phosphorylation site occupancy during mitosis.</title>
        <authorList>
            <person name="Olsen J.V."/>
            <person name="Vermeulen M."/>
            <person name="Santamaria A."/>
            <person name="Kumar C."/>
            <person name="Miller M.L."/>
            <person name="Jensen L.J."/>
            <person name="Gnad F."/>
            <person name="Cox J."/>
            <person name="Jensen T.S."/>
            <person name="Nigg E.A."/>
            <person name="Brunak S."/>
            <person name="Mann M."/>
        </authorList>
    </citation>
    <scope>PHOSPHORYLATION [LARGE SCALE ANALYSIS] AT SER-83</scope>
    <scope>IDENTIFICATION BY MASS SPECTROMETRY [LARGE SCALE ANALYSIS]</scope>
    <source>
        <tissue>Cervix carcinoma</tissue>
    </source>
</reference>
<reference key="18">
    <citation type="journal article" date="2012" name="J. Immunol.">
        <title>Caspase-4 is required for activation of inflammasomes.</title>
        <authorList>
            <person name="Sollberger G."/>
            <person name="Strittmatter G.E."/>
            <person name="Kistowska M."/>
            <person name="French L.E."/>
            <person name="Beer H.D."/>
        </authorList>
    </citation>
    <scope>FUNCTION</scope>
    <scope>INTERACTION WITH CASP1</scope>
    <scope>SUBCELLULAR LOCATION</scope>
    <scope>TISSUE SPECIFICITY</scope>
    <scope>MUTAGENESIS OF CYS-258</scope>
</reference>
<reference key="19">
    <citation type="journal article" date="2012" name="Proc. Natl. Acad. Sci. U.S.A.">
        <title>N-terminal acetylome analyses and functional insights of the N-terminal acetyltransferase NatB.</title>
        <authorList>
            <person name="Van Damme P."/>
            <person name="Lasa M."/>
            <person name="Polevoda B."/>
            <person name="Gazquez C."/>
            <person name="Elosegui-Artola A."/>
            <person name="Kim D.S."/>
            <person name="De Juan-Pardo E."/>
            <person name="Demeyer K."/>
            <person name="Hole K."/>
            <person name="Larrea E."/>
            <person name="Timmerman E."/>
            <person name="Prieto J."/>
            <person name="Arnesen T."/>
            <person name="Sherman F."/>
            <person name="Gevaert K."/>
            <person name="Aldabe R."/>
        </authorList>
    </citation>
    <scope>ACETYLATION [LARGE SCALE ANALYSIS] AT ALA-2 (ISOFORM 2)</scope>
    <scope>CLEAVAGE OF INITIATOR METHIONINE [LARGE SCALE ANALYSIS] (ISOFORM 2)</scope>
    <scope>IDENTIFICATION BY MASS SPECTROMETRY [LARGE SCALE ANALYSIS]</scope>
</reference>
<reference key="20">
    <citation type="journal article" date="2013" name="J. Biol. Chem.">
        <title>Transmembrane protein 214 (TMEM214) mediates endoplasmic reticulum stress-induced caspase 4 enzyme activation and apoptosis.</title>
        <authorList>
            <person name="Li C."/>
            <person name="Wei J."/>
            <person name="Li Y."/>
            <person name="He X."/>
            <person name="Zhou Q."/>
            <person name="Yan J."/>
            <person name="Zhang J."/>
            <person name="Liu Y."/>
            <person name="Liu Y."/>
            <person name="Shu H.B."/>
        </authorList>
    </citation>
    <scope>FUNCTION</scope>
    <scope>SUBCELLULAR LOCATION</scope>
    <scope>INTERACTION WITH TMEM214</scope>
    <scope>MUTAGENESIS OF CYS-258</scope>
</reference>
<reference key="21">
    <citation type="journal article" date="2013" name="PLoS ONE">
        <title>The E. coli effector protein NleF is a caspase inhibitor.</title>
        <authorList>
            <person name="Blasche S."/>
            <person name="Mortl M."/>
            <person name="Steuber H."/>
            <person name="Siszler G."/>
            <person name="Nisa S."/>
            <person name="Schwarz F."/>
            <person name="Lavrik I."/>
            <person name="Gronewold T.M."/>
            <person name="Maskos K."/>
            <person name="Donnenberg M.S."/>
            <person name="Ullmann D."/>
            <person name="Uetz P."/>
            <person name="Kogl M."/>
        </authorList>
    </citation>
    <scope>INTERACTION WITH E.COLI NLEF (MICROBIAL INFECTION)</scope>
    <scope>CATALYTIC ACTIVITY</scope>
    <scope>FUNCTION</scope>
    <scope>ACTIVITY REGULATION (MICROBIAL INFECTION)</scope>
</reference>
<reference key="22">
    <citation type="journal article" date="2014" name="Cell Host Microbe">
        <title>Noncanonical inflammasome activation of caspase-4/caspase-11 mediates epithelial defenses against enteric bacterial pathogens.</title>
        <authorList>
            <person name="Knodler L.A."/>
            <person name="Crowley S.M."/>
            <person name="Sham H.P."/>
            <person name="Yang H."/>
            <person name="Wrande M."/>
            <person name="Ma C."/>
            <person name="Ernst R.K."/>
            <person name="Steele-Mortimer O."/>
            <person name="Celli J."/>
            <person name="Vallance B.A."/>
        </authorList>
    </citation>
    <scope>FUNCTION</scope>
    <scope>TISSUE SPECIFICITY</scope>
    <scope>INDUCTION BY LPS</scope>
</reference>
<reference key="23">
    <citation type="journal article" date="2014" name="J. Immunol.">
        <title>A critical role for human caspase-4 in endotoxin sensitivity.</title>
        <authorList>
            <person name="Kajiwara Y."/>
            <person name="Schiff T."/>
            <person name="Voloudakis G."/>
            <person name="Gama Sosa M.A."/>
            <person name="Elder G."/>
            <person name="Bozdagi O."/>
            <person name="Buxbaum J.D."/>
        </authorList>
    </citation>
    <scope>FUNCTION</scope>
    <scope>INDUCTION BY LPS</scope>
</reference>
<reference key="24">
    <citation type="journal article" date="2014" name="Nature">
        <title>Inflammatory caspases are innate immune receptors for intracellular LPS.</title>
        <authorList>
            <person name="Shi J."/>
            <person name="Zhao Y."/>
            <person name="Wang Y."/>
            <person name="Gao W."/>
            <person name="Ding J."/>
            <person name="Li P."/>
            <person name="Hu L."/>
            <person name="Shao F."/>
        </authorList>
    </citation>
    <scope>FUNCTION</scope>
    <scope>OLIGOMERIZATION</scope>
    <scope>INTERACTION WITH LPS</scope>
    <scope>ACTIVITY REGULATION</scope>
    <scope>SUBCELLULAR LOCATION</scope>
    <scope>DOMAIN</scope>
    <scope>MUTAGENESIS OF CYS-258</scope>
</reference>
<reference key="25">
    <citation type="journal article" date="2015" name="Eur. J. Immunol.">
        <title>Caspase-4 mediates non-canonical activation of the NLRP3 inflammasome in human myeloid cells.</title>
        <authorList>
            <person name="Schmid-Burgk J.L."/>
            <person name="Gaidt M.M."/>
            <person name="Schmidt T."/>
            <person name="Ebert T.S."/>
            <person name="Bartok E."/>
            <person name="Hornung V."/>
        </authorList>
    </citation>
    <scope>FUNCTION</scope>
</reference>
<reference key="26">
    <citation type="journal article" date="2015" name="Eur. J. Immunol.">
        <title>NLRP3 inflammasome activation downstream of cytoplasmic LPS recognition by both caspase-4 and caspase-5.</title>
        <authorList>
            <person name="Baker P.J."/>
            <person name="Boucher D."/>
            <person name="Bierschenk D."/>
            <person name="Tebartz C."/>
            <person name="Whitney P.G."/>
            <person name="D'Silva D.B."/>
            <person name="Tanzer M.C."/>
            <person name="Monteleone M."/>
            <person name="Robertson A.A."/>
            <person name="Cooper M.A."/>
            <person name="Alvarez-Diaz S."/>
            <person name="Herold M.J."/>
            <person name="Bedoui S."/>
            <person name="Schroder K."/>
            <person name="Masters S.L."/>
        </authorList>
    </citation>
    <scope>FUNCTION</scope>
</reference>
<reference key="27">
    <citation type="journal article" date="2015" name="Nat. Commun.">
        <title>Human caspase-4 and caspase-5 regulate the one-step non-canonical inflammasome activation in monocytes.</title>
        <authorList>
            <person name="Vigano E."/>
            <person name="Diamond C.E."/>
            <person name="Spreafico R."/>
            <person name="Balachander A."/>
            <person name="Sobota R.M."/>
            <person name="Mortellaro A."/>
        </authorList>
    </citation>
    <scope>FUNCTION</scope>
    <scope>INDUCTION BY LPS</scope>
</reference>
<reference key="28">
    <citation type="journal article" date="2015" name="Nature">
        <title>Cleavage of GSDMD by inflammatory caspases determines pyroptotic cell death.</title>
        <authorList>
            <person name="Shi J."/>
            <person name="Zhao Y."/>
            <person name="Wang K."/>
            <person name="Shi X."/>
            <person name="Wang Y."/>
            <person name="Huang H."/>
            <person name="Zhuang Y."/>
            <person name="Cai T."/>
            <person name="Wang F."/>
            <person name="Shao F."/>
        </authorList>
    </citation>
    <scope>FUNCTION</scope>
    <scope>GSDMD CLEAVAGE</scope>
</reference>
<reference key="29">
    <citation type="journal article" date="2015" name="PLoS ONE">
        <title>NF-kappaB regulates caspase-4 expression and sensitizes neuroblastoma cells to Fas-induced apoptosis.</title>
        <authorList>
            <person name="Yang H.J."/>
            <person name="Wang M."/>
            <person name="Wang L."/>
            <person name="Cheng B.F."/>
            <person name="Lin X.Y."/>
            <person name="Feng Z.W."/>
        </authorList>
    </citation>
    <scope>INDUCTION BY NF-KAPPA-B</scope>
</reference>
<reference key="30">
    <citation type="journal article" date="2015" name="Proc. Natl. Acad. Sci. U.S.A.">
        <title>Human caspase-4 mediates noncanonical inflammasome activation against gram-negative bacterial pathogens.</title>
        <authorList>
            <person name="Casson C.N."/>
            <person name="Yu J."/>
            <person name="Reyes V.M."/>
            <person name="Taschuk F.O."/>
            <person name="Yadav A."/>
            <person name="Copenhaver A.M."/>
            <person name="Nguyen H.T."/>
            <person name="Collman R.G."/>
            <person name="Shin S."/>
        </authorList>
    </citation>
    <scope>FUNCTION</scope>
    <scope>INDUCTION BY LPS AND IFNB1</scope>
</reference>
<reference key="31">
    <citation type="journal article" date="2017" name="Immunity">
        <title>Inflammasome activation triggers caspase-1-mediated cleavage of cGAS to regulate responses to DNA virus infection.</title>
        <authorList>
            <person name="Wang Y."/>
            <person name="Ning X."/>
            <person name="Gao P."/>
            <person name="Wu S."/>
            <person name="Sha M."/>
            <person name="Lv M."/>
            <person name="Zhou X."/>
            <person name="Gao J."/>
            <person name="Fang R."/>
            <person name="Meng G."/>
            <person name="Su X."/>
            <person name="Jiang Z."/>
        </authorList>
    </citation>
    <scope>FUNCTION</scope>
    <scope>MUTAGENESIS OF CYS-258</scope>
</reference>
<reference key="32">
    <citation type="journal article" date="2018" name="Cell Death Differ.">
        <title>Caspase-4 activation by a bacterial surface protein is mediated by cathepsin G in human gingival fibroblasts.</title>
        <authorList>
            <person name="Jun H.K."/>
            <person name="Jung Y.J."/>
            <person name="Ji S."/>
            <person name="An S.J."/>
            <person name="Choi B.K."/>
        </authorList>
    </citation>
    <scope>FUNCTION</scope>
    <scope>INTERACTION WITH CTSG</scope>
</reference>
<reference key="33">
    <citation type="journal article" date="2018" name="Nat. Commun.">
        <title>The oxidized phospholipid oxPAPC protects from septic shock by targeting the non-canonical inflammasome in macrophages.</title>
        <authorList>
            <person name="Chu L.H."/>
            <person name="Indramohan M."/>
            <person name="Ratsimandresy R.A."/>
            <person name="Gangopadhyay A."/>
            <person name="Morris E.P."/>
            <person name="Monack D.M."/>
            <person name="Dorfleutner A."/>
            <person name="Stehlik C."/>
        </authorList>
    </citation>
    <scope>FUNCTION</scope>
    <scope>ACTIVITY REGULATION</scope>
</reference>
<reference key="34">
    <citation type="journal article" date="2019" name="EMBO J.">
        <title>Human GBP1 is a microbe-specific gatekeeper of macrophage apoptosis and pyroptosis.</title>
        <authorList>
            <person name="Fisch D."/>
            <person name="Bando H."/>
            <person name="Clough B."/>
            <person name="Hornung V."/>
            <person name="Yamamoto M."/>
            <person name="Shenoy A.R."/>
            <person name="Frickel E.M."/>
        </authorList>
    </citation>
    <scope>FUNCTION</scope>
</reference>
<reference key="35">
    <citation type="journal article" date="2019" name="Nat. Immunol.">
        <title>SERPINB1-mediated checkpoint of inflammatory caspase activation.</title>
        <authorList>
            <person name="Choi Y.J."/>
            <person name="Kim S."/>
            <person name="Choi Y."/>
            <person name="Nielsen T.B."/>
            <person name="Yan J."/>
            <person name="Lu A."/>
            <person name="Ruan J."/>
            <person name="Lee H.R."/>
            <person name="Wu H."/>
            <person name="Spellberg B."/>
            <person name="Jung J.U."/>
        </authorList>
    </citation>
    <scope>INTERACTION WITH SERPINB1</scope>
</reference>
<reference key="36">
    <citation type="journal article" date="2020" name="EMBO J.">
        <title>Direct binding of polymeric GBP1 to LPS disrupts bacterial cell envelope functions.</title>
        <authorList>
            <person name="Kutsch M."/>
            <person name="Sistemich L."/>
            <person name="Lesser C.F."/>
            <person name="Goldberg M.B."/>
            <person name="Herrmann C."/>
            <person name="Coers J."/>
        </authorList>
    </citation>
    <scope>FUNCTION</scope>
</reference>
<reference key="37">
    <citation type="journal article" date="2020" name="Nat. Commun.">
        <title>Human GBP1 binds LPS to initiate assembly of a caspase-4 activating platform on cytosolic bacteria.</title>
        <authorList>
            <person name="Santos J.C."/>
            <person name="Boucher D."/>
            <person name="Schneider L.K."/>
            <person name="Demarco B."/>
            <person name="Dilucca M."/>
            <person name="Shkarina K."/>
            <person name="Heilig R."/>
            <person name="Chen K.W."/>
            <person name="Lim R.Y.H."/>
            <person name="Broz P."/>
        </authorList>
    </citation>
    <scope>FUNCTION</scope>
</reference>
<reference key="38">
    <citation type="journal article" date="2021" name="Int. Endod. J.">
        <title>NLRP6-caspase 4 inflammasome activation in response to cariogenic bacterial lipoteichoic acid in human dental pulp inflammation.</title>
        <authorList>
            <person name="Tian X.X."/>
            <person name="Li R."/>
            <person name="Liu C."/>
            <person name="Liu F."/>
            <person name="Yang L.J."/>
            <person name="Wang S.P."/>
            <person name="Wang C.L."/>
        </authorList>
    </citation>
    <scope>FUNCTION</scope>
</reference>
<reference key="39">
    <citation type="journal article" date="2021" name="Nature">
        <title>Shigella evades pyroptosis by arginine ADP-riboxanation of caspase-11.</title>
        <authorList>
            <person name="Li Z."/>
            <person name="Liu W."/>
            <person name="Fu J."/>
            <person name="Cheng S."/>
            <person name="Xu Y."/>
            <person name="Wang Z."/>
            <person name="Liu X."/>
            <person name="Shi X."/>
            <person name="Liu Y."/>
            <person name="Qi X."/>
            <person name="Liu X."/>
            <person name="Ding J."/>
            <person name="Shao F."/>
        </authorList>
    </citation>
    <scope>FUNCTION</scope>
    <scope>PROTEOLYTIC CLEAVAGE</scope>
    <scope>ADP-RIBOXANATION AT ARG-314 (MICROBIAL INFECTION)</scope>
    <scope>MUTAGENESIS OF ARG-314</scope>
</reference>
<reference key="40">
    <citation type="journal article" date="2022" name="Mol. Cell">
        <title>Pathogen hijacks programmed cell death signaling by arginine ADPR-deacylization of caspases.</title>
        <authorList>
            <person name="Peng T."/>
            <person name="Tao X."/>
            <person name="Xia Z."/>
            <person name="Hu S."/>
            <person name="Xue J."/>
            <person name="Zhu Q."/>
            <person name="Pan X."/>
            <person name="Zhang Q."/>
            <person name="Li S."/>
        </authorList>
    </citation>
    <scope>ADP-RIBOXANATION AT ARG-314 (MICROBIAL INFECTION)</scope>
</reference>
<reference key="41">
    <citation type="journal article" date="2023" name="Immunity">
        <title>The orphan receptor Nur77 binds cytoplasmic LPS to activate the non-canonical NLRP3 inflammasome.</title>
        <authorList>
            <person name="Zhu F."/>
            <person name="Ma J."/>
            <person name="Li W."/>
            <person name="Liu Q."/>
            <person name="Qin X."/>
            <person name="Qian Y."/>
            <person name="Wang C."/>
            <person name="Zhang Y."/>
            <person name="Li Y."/>
            <person name="Jiang D."/>
            <person name="Wang S."/>
            <person name="Xia P."/>
        </authorList>
    </citation>
    <scope>FUNCTION</scope>
    <scope>IDENTIFICATION BY MASS SPECTROMETRY</scope>
</reference>
<reference key="42">
    <citation type="journal article" date="2023" name="Proc. Natl. Acad. Sci. U.S.A.">
        <title>Shigella IpaH9.8 limits GBP1-dependent LPS release from intracytosolic bacteria to suppress caspase-4 activation.</title>
        <authorList>
            <person name="Goers L."/>
            <person name="Kim K."/>
            <person name="Stedman T.C."/>
            <person name="Canning P.J."/>
            <person name="Mou X."/>
            <person name="Ernst N.H."/>
            <person name="Coers J."/>
            <person name="Lesser C.F."/>
        </authorList>
    </citation>
    <scope>ADP-RIBOXANATION (MICROBIAL INFECTION)</scope>
</reference>
<reference evidence="55" key="43">
    <citation type="journal article" date="2020" name="Cell">
        <title>Structural mechanism for GSDMD targeting by autoprocessed caspases in pyroptosis.</title>
        <authorList>
            <person name="Wang K."/>
            <person name="Sun Q."/>
            <person name="Zhong X."/>
            <person name="Zeng M."/>
            <person name="Zeng H."/>
            <person name="Shi X."/>
            <person name="Li Z."/>
            <person name="Wang Y."/>
            <person name="Zhao Q."/>
            <person name="Shao F."/>
            <person name="Ding J."/>
        </authorList>
    </citation>
    <scope>X-RAY CRYSTALLOGRAPHY (3.61 ANGSTROMS) OF 105-289 AND 290-377 IN COMPLEX WITH GSDMD</scope>
    <scope>FUNCTION</scope>
    <scope>SUBUNIT</scope>
    <scope>PROTEOLYTIC CLEAVAGE</scope>
    <scope>MUTAGENESIS OF TRP-267; ASP-270 AND VAL-291</scope>
</reference>
<reference evidence="56 57 58 59 60" key="44">
    <citation type="journal article" date="2023" name="Nat. Struct. Mol. Biol.">
        <title>Structural mechanisms of calmodulin activation of Shigella effector OspC3 to ADP-riboxanate caspase-4/11 and block pyroptosis.</title>
        <authorList>
            <person name="Hou Y."/>
            <person name="Zeng H."/>
            <person name="Li Z."/>
            <person name="Feng N."/>
            <person name="Meng F."/>
            <person name="Xu Y."/>
            <person name="Li L."/>
            <person name="Shao F."/>
            <person name="Ding J."/>
        </authorList>
    </citation>
    <scope>X-RAY CRYSTALLOGRAPHY (1.96 ANGSTROMS) OF 102-377 IN COMPLEX WITH CALMODULIN AND S.FLEXNERI OSPC3</scope>
    <scope>ADP-RIBOXANATION AT ARG-314 (MICROBIAL INFECTION)</scope>
</reference>
<reference evidence="62" key="45">
    <citation type="journal article" date="2023" name="Nature">
        <title>Structural insights into cytokine cleavage by inflammatory caspase-4.</title>
        <authorList>
            <person name="Devant P."/>
            <person name="Dong Y."/>
            <person name="Mintseris J."/>
            <person name="Ma W."/>
            <person name="Gygi S.P."/>
            <person name="Wu H."/>
            <person name="Kagan J.C."/>
        </authorList>
    </citation>
    <scope>STRUCTURE BY ELECTRON MICROSCOPY (3.2 ANGSTROMS) OF 94-270 AND 290-377 IN COMPLEX WITH IL18</scope>
    <scope>FUNCTION</scope>
    <scope>CATALYTIC ACTIVITY</scope>
    <scope>ACTIVE SITE</scope>
    <scope>MUTAGENESIS OF CYS-258; TRP-267; ARG-269 AND LYS-356</scope>
</reference>
<reference evidence="61" key="46">
    <citation type="journal article" date="2023" name="Nature">
        <title>Recognition and maturation of IL-18 by caspase-4 noncanonical inflammasome.</title>
        <authorList>
            <person name="Shi X."/>
            <person name="Sun Q."/>
            <person name="Hou Y."/>
            <person name="Zeng H."/>
            <person name="Cao Y."/>
            <person name="Dong M."/>
            <person name="Ding J."/>
            <person name="Shao F."/>
        </authorList>
    </citation>
    <scope>X-RAY CRYSTALLOGRAPHY (3.12 ANGSTROMS) OF 102-270 AND 290-377 IN COMPLEX WITH IL18 AND S.FLEXNERI OSPC3</scope>
    <scope>FUNCTION</scope>
    <scope>CATALYTIC ACTIVITY</scope>
    <scope>SUBUNIT</scope>
    <scope>PROTEOLYTIC CLEAVAGE</scope>
    <scope>ACTIVE SITE</scope>
    <scope>MUTAGENESIS OF ARG-152; ILE-212; CYS-258; ALA-261; TRP-267; ASP-289; VAL-291; LYS-293; ARG-314 AND ILE-321</scope>
</reference>
<name>CASP4_HUMAN</name>
<comment type="function">
    <text evidence="2 8 9 12 13 14 15 16 17 19 20 21 22 23 24 26 28 29 30 31 32 33 36 39 40 41 42">Inflammatory caspase that acts as the effector of the non-canonical inflammasome by mediating lipopolysaccharide (LPS)-induced pyroptosis (PubMed:25119034, PubMed:26375003, PubMed:32109412, PubMed:34671164, PubMed:37001519, PubMed:37993712, PubMed:37993714). Also indirectly activates the NLRP3 and NLRP6 inflammasomes (PubMed:23516580, PubMed:26375003, PubMed:32109412, PubMed:7797510). Acts as a thiol protease that cleaves a tetrapeptide after an Asp residue at position P1: catalyzes cleavage of CGAS, GSDMD and IL18 (PubMed:15326478, PubMed:23516580, PubMed:26375003, PubMed:28314590, PubMed:32109412, PubMed:37993712, PubMed:37993714, PubMed:7797510). Effector of the non-canonical inflammasome independently of NLRP3 inflammasome and CASP1: the non-canonical inflammasome promotes pyroptosis through GSDMD cleavage without involving secretion of cytokine IL1B (PubMed:25119034, PubMed:25121752, PubMed:26375003, PubMed:31268602, PubMed:32109412, PubMed:37993712, PubMed:37993714). In the non-canonical inflammasome, CASP4 is activated by direct binding to the lipid A moiety of LPS without the need of an upstream sensor (PubMed:25119034, PubMed:25121752, PubMed:29520027, PubMed:32510692, PubMed:32581219, PubMed:37993712). LPS-binding promotes CASP4 activation and CASP4-mediated cleavage of GSDMD and IL18, followed by IL18 secretion through the GSDMD pore, pyroptosis of infected cells and their extrusion into the gut lumen (PubMed:25119034, PubMed:25121752, PubMed:37993712, PubMed:37993714). Also indirectly promotes secretion of mature cytokines (IL1A and HMGB1) downstream of GSDMD-mediated pyroptosis via activation of the NLRP3 and NLRP6 inflammasomes (PubMed:26375003, PubMed:32109412). Involved in NLRP3-dependent CASP1 activation and IL1B secretion in response to non-canonical activators, such as UVB radiation or cholera enterotoxin (PubMed:22246630, PubMed:23516580, PubMed:24879791, PubMed:25964352, PubMed:26173988, PubMed:26174085, PubMed:26508369). Involved in NLRP6 inflammasome-dependent activation in response to lipoteichoic acid (LTA), a cell-wall component of Gram-positive bacteria, which leads to CASP1 activation and IL1B secretion (PubMed:33377178). Involved in LPS-induced IL6 secretion; this activity may not require caspase enzymatic activity (PubMed:26508369). The non-canonical inflammasome is required for innate immunity to cytosolic, but not vacuolar, bacteria (By similarity). Plays a crucial role in the restriction of S.typhimurium replication in colonic epithelial cells during infection (PubMed:25121752, PubMed:25964352). Activation of the non-canonical inflammasome in brain endothelial cells can lead to excessive pyroptosis, leading to blood-brain barrier breakdown (By similarity). Pyroptosis limits bacterial replication, while cytokine secretion promotes the recruitment and activation of immune cells and triggers mucosal inflammation (PubMed:25121752, PubMed:25964352, PubMed:26375003). May also act as an activator of adaptive immunity in dendritic cells, following activation by oxidized phospholipid 1-palmitoyl-2-arachidonoyl- sn-glycero-3-phosphorylcholine, an oxidized phospholipid (oxPAPC) (By similarity). Involved in cell death induced by endoplasmic reticulum stress and by treatment with cytotoxic APP peptides found in Alzheimer's patient brains (PubMed:15123740, PubMed:22246630, PubMed:23661706). Cleavage of GSDMD is not strictly dependent on the consensus cleavage site but depends on an exosite interface on CASP4 that recognizes and binds the Gasdermin-D, C-terminal (GSDMD-CT) part (PubMed:32109412). Catalyzes cleavage and maturation of IL18; IL18 processing also depends of the exosite interface on CASP4 (PubMed:15326478, PubMed:37993712, PubMed:37993714). In contrast, it does not directly process IL1B (PubMed:7743998, PubMed:7797510, PubMed:7797592). During non-canonical inflammasome activation, cuts CGAS and may play a role in the regulation of antiviral innate immune activation (PubMed:28314590).</text>
</comment>
<comment type="function">
    <text evidence="25">(Microbial infection) In response to the Td92 surface protein of the periodontal pathogen T.denticola, activated by cathepsin CTSG which leads to production and secretion of IL1A and pyroptosis of gingival fibroblasts.</text>
</comment>
<comment type="catalytic activity">
    <reaction evidence="13 38 39 41">
        <text>Strict requirement for Asp at the P1 position. It has a preferred cleavage sequence of Tyr-Val-Ala-Asp-|- but also cleaves at Asp-Glu-Val-Asp-|-.</text>
        <dbReference type="EC" id="3.4.22.57"/>
    </reaction>
</comment>
<comment type="activity regulation">
    <text evidence="2 16 26">Activated by homooligomerization induced by direct binding to cytosolic LPS, in a TLR4-independent manner (PubMed:25119034, PubMed:29520027). In addition to LPS, CASP4/CASP11 may also be activated by oxidized phospholipid 1-palmitoyl-2-arachidonoyl- sn-glycero-3-phosphorylcholine, an oxidized phospholipid (oxPAPC), in dendritic cells, promoting adaptive immunity (By similarity). The role of oxPAPC is however unclear and another report suggests that oxPAPC competes with LPS-binding and inhibits the non-canonical inflammasome in macrophages (PubMed:29520027).</text>
</comment>
<comment type="biophysicochemical properties">
    <kinetics>
        <KM evidence="41">681 uM for synthetic peptide acetyl-YVAD-p-nitroanilide</KM>
        <text evidence="41">Values obtained using the partial C-terminal enzyme sequence of 105-377.</text>
    </kinetics>
</comment>
<comment type="subunit">
    <text evidence="2 11 12 14 16 27 29">Heterotetramer that consists of two anti-parallel arranged heterodimers, each one formed by a 20 kDa (Caspase-4 subunit p20) and a 10 kDa (Caspase-4 subunit p10) subunit (PubMed:32109412). Upon direct LPS-binding, forms large homooligomers, resulting in its activation (By similarity). These oligomers are often referred to as 'non-canonical inflammasomes' (PubMed:25119034). In its precursor form, interacts with TMEM214; this interaction is required for association with the endoplasmic reticulum membrane (PubMed:23661706). Interacts with CASP1 (PubMed:22246630). Interacts with NOD2 (PubMed:18511561). Interacts with SERPINB1; this interaction regulates CASP4 activity (PubMed:30692621).</text>
</comment>
<comment type="subunit">
    <molecule>Caspase-4 subunit p20</molecule>
    <text evidence="29 39">Heterotetramer that consists of two anti-parallel arranged heterodimers, each one formed by a 20 kDa (Caspase-4 subunit p20) and a 10 kDa (Caspase-4 subunit p10) subunit.</text>
</comment>
<comment type="subunit">
    <molecule>Caspase-4 subunit p10</molecule>
    <text evidence="29 39">Heterotetramer that consists of two anti-parallel arranged heterodimers, each one formed by a 20 kDa (Caspase-4 subunit p20) and a 10 kDa (Caspase-4 subunit p10) subunit.</text>
</comment>
<comment type="subunit">
    <text evidence="13">(Microbial infection) Interacts with NleF protein from pathogenic E.coli; this interaction leads to enzyme inhibition.</text>
</comment>
<comment type="subunit">
    <text evidence="25">(Microbial infection) Interacts with cathepsin CTSG; the interaction is promoted by the Td92 surface protein of the periodontal pathogen T.denticola and leads to CASP4 activation.</text>
</comment>
<comment type="interaction">
    <interactant intactId="EBI-1057327">
        <id>P49662</id>
    </interactant>
    <interactant intactId="EBI-720416">
        <id>Q17R89</id>
        <label>ARHGAP44</label>
    </interactant>
    <organismsDiffer>false</organismsDiffer>
    <experiments>2</experiments>
</comment>
<comment type="subcellular location">
    <subcellularLocation>
        <location evidence="14">Cytoplasm</location>
        <location evidence="14">Cytosol</location>
    </subcellularLocation>
    <subcellularLocation>
        <location evidence="8 14">Endoplasmic reticulum membrane</location>
        <topology evidence="14">Peripheral membrane protein</topology>
        <orientation evidence="14">Cytoplasmic side</orientation>
    </subcellularLocation>
    <subcellularLocation>
        <location evidence="8 14">Mitochondrion</location>
    </subcellularLocation>
    <subcellularLocation>
        <location evidence="16 23">Inflammasome</location>
    </subcellularLocation>
    <subcellularLocation>
        <location evidence="12">Secreted</location>
    </subcellularLocation>
    <text evidence="8 12">Predominantly localizes to the endoplasmic reticulum (ER). Association with the ER membrane requires TMEM214 (PubMed:15123740). Released in the extracellular milieu by keratinocytes following UVB irradiation (PubMed:22246630).</text>
</comment>
<comment type="alternative products">
    <event type="alternative splicing"/>
    <isoform>
        <id>P49662-1</id>
        <name>1</name>
        <name>Alpha</name>
        <sequence type="displayed"/>
    </isoform>
    <isoform>
        <id>P49662-2</id>
        <name>2</name>
        <name>Gamma</name>
        <name>mih1-beta</name>
        <sequence type="described" ref="VSP_043495"/>
    </isoform>
    <isoform>
        <id>P49662-3</id>
        <name>3</name>
        <name>mih1-delta</name>
        <sequence type="described" ref="VSP_058177 VSP_058178"/>
    </isoform>
    <isoform>
        <id>P49662-4</id>
        <name>4</name>
        <sequence type="described" ref="VSP_058181 VSP_058182"/>
    </isoform>
    <isoform>
        <id>P49662-5</id>
        <name>5</name>
        <sequence type="described" ref="VSP_058179 VSP_058180"/>
    </isoform>
</comment>
<comment type="tissue specificity">
    <text evidence="6 12 17 40 41 42">Widely expressed, including in keratinocytes and colonic and small intestinal epithelial cells (at protein level). Not detected in brain.</text>
</comment>
<comment type="induction">
    <text evidence="10 15 18">In peripheral blood mononuclear cells and purified monocytes, up-regulated by bacterial lipopolysaccharides (LPS) and interferon-beta/IFNB1 at the mRNA level (PubMed:16893518, PubMed:24879791). However, this increase is not observed at the protein level, which remains constant in monocytes and other cell types following LPS treatment (PubMed:25121752, PubMed:26508369). In monocyte-derived macrophages, some up-regulation at the protein level is observed following treatment with LPS and IFNB1 (PubMed:25964352). In SH-EP1 neuroblastoma cell line, up-regulated by NF-kappa-B RELA/p65 at both mRNA and protein levels.</text>
</comment>
<comment type="domain">
    <text evidence="16">The CARD domain mediates LPS recognition and homooligomerization.</text>
</comment>
<comment type="PTM">
    <text evidence="8 29 33 39 40 41">In response to activation signals, undergoes autoproteolytic cleavage and activation.</text>
</comment>
<comment type="PTM">
    <text evidence="33 34 35 37">(Microbial infection) ADP-riboxanation by S.flexneri OspC3 blocks CASP4 autoprocessing, preventing CASP4 activation and ability to recognize and cleave GSDMD, thereby thwarting the inflammasome/pyroptosis-mediated defense.</text>
</comment>
<comment type="miscellaneous">
    <molecule>Isoform 3</molecule>
    <text evidence="50">May be due to competing acceptor splice site. May be produced at very low levels due to a premature stop codon in the mRNA, leading to nonsense-mediated mRNA decay.</text>
</comment>
<comment type="similarity">
    <text evidence="50">Belongs to the peptidase C14A family.</text>
</comment>
<comment type="sequence caution" evidence="50">
    <conflict type="erroneous translation">
        <sequence resource="EMBL-CDS" id="AAC99854"/>
    </conflict>
    <text>Erroneous CDS prediction.</text>
</comment>
<comment type="sequence caution" evidence="50">
    <conflict type="erroneous gene model prediction">
        <sequence resource="EMBL-CDS" id="EAW67050"/>
    </conflict>
</comment>
<comment type="sequence caution" evidence="50">
    <molecule>Isoform 2</molecule>
    <conflict type="frameshift">
        <sequence resource="EMBL-CDS" id="AAC99851"/>
    </conflict>
</comment>
<gene>
    <name evidence="45 54" type="primary">CASP4</name>
    <name evidence="47" type="synonym">ICH2</name>
</gene>
<accession>P49662</accession>
<accession>A2NHL8</accession>
<accession>A2NHL9</accession>
<accession>A2NHM0</accession>
<accession>B3KPZ9</accession>
<accession>B4DJH5</accession>
<accession>B4E2D2</accession>
<accession>O95601</accession>
<accession>Q7KYX7</accession>
<accession>Q9UG96</accession>